<feature type="chain" id="PRO_0000075324" description="Peptidyl-prolyl cis-trans isomerase FKBP5">
    <location>
        <begin position="1"/>
        <end position="457"/>
    </location>
</feature>
<feature type="domain" description="PPIase FKBP-type 1" evidence="2">
    <location>
        <begin position="42"/>
        <end position="130"/>
    </location>
</feature>
<feature type="domain" description="PPIase FKBP-type 2" evidence="2">
    <location>
        <begin position="157"/>
        <end position="243"/>
    </location>
</feature>
<feature type="repeat" description="TPR 1">
    <location>
        <begin position="268"/>
        <end position="301"/>
    </location>
</feature>
<feature type="repeat" description="TPR 2">
    <location>
        <begin position="317"/>
        <end position="350"/>
    </location>
</feature>
<feature type="repeat" description="TPR 3">
    <location>
        <begin position="351"/>
        <end position="384"/>
    </location>
</feature>
<feature type="region of interest" description="Disordered" evidence="3">
    <location>
        <begin position="1"/>
        <end position="24"/>
    </location>
</feature>
<feature type="region of interest" description="Disordered" evidence="3">
    <location>
        <begin position="420"/>
        <end position="457"/>
    </location>
</feature>
<feature type="compositionally biased region" description="Basic and acidic residues" evidence="3">
    <location>
        <begin position="1"/>
        <end position="11"/>
    </location>
</feature>
<feature type="modified residue" description="N-acetylmethionine" evidence="15">
    <location>
        <position position="1"/>
    </location>
</feature>
<feature type="modified residue" description="Phosphoserine" evidence="16">
    <location>
        <position position="13"/>
    </location>
</feature>
<feature type="modified residue" description="N6-acetyllysine" evidence="7">
    <location>
        <position position="28"/>
    </location>
</feature>
<feature type="modified residue" description="N6-acetyllysine" evidence="7">
    <location>
        <position position="155"/>
    </location>
</feature>
<feature type="modified residue" description="Phosphoserine" evidence="14 16">
    <location>
        <position position="445"/>
    </location>
</feature>
<feature type="splice variant" id="VSP_044820" description="In isoform 2." evidence="12">
    <original>YGFGEAGKPKFGIEPNAELIYEVTLKSFEKAKESWEMDTKEKLEQA</original>
    <variation>PKNPGRWIPKKNWSRLPLSKRREPYTSRCVSPYAILSISKNLFKCW</variation>
    <location>
        <begin position="223"/>
        <end position="268"/>
    </location>
</feature>
<feature type="splice variant" id="VSP_044821" description="In isoform 2." evidence="12">
    <location>
        <begin position="269"/>
        <end position="457"/>
    </location>
</feature>
<feature type="mutagenesis site" description="Mimics acetylation; impaired interaction with AKT1 and PHLPP1; when associated with Q-155." evidence="7">
    <original>K</original>
    <variation>Q</variation>
    <location>
        <position position="28"/>
    </location>
</feature>
<feature type="mutagenesis site" description="Decreased acetylation; promotes interaction with AKT1 and PHLPP1; when associated with R-155." evidence="7">
    <original>K</original>
    <variation>R</variation>
    <location>
        <position position="28"/>
    </location>
</feature>
<feature type="mutagenesis site" description="Mimics acetylation; impaired interaction with AKT1 and PHLPP1; when associated with Q-28." evidence="7">
    <original>K</original>
    <variation>Q</variation>
    <location>
        <position position="155"/>
    </location>
</feature>
<feature type="mutagenesis site" description="Decreased acetylation; promotes interaction with AKT1 and PHLPP1; when associated with R-28." evidence="7">
    <original>K</original>
    <variation>R</variation>
    <location>
        <position position="155"/>
    </location>
</feature>
<feature type="helix" evidence="20">
    <location>
        <begin position="16"/>
        <end position="21"/>
    </location>
</feature>
<feature type="strand" evidence="22">
    <location>
        <begin position="22"/>
        <end position="24"/>
    </location>
</feature>
<feature type="strand" evidence="17">
    <location>
        <begin position="26"/>
        <end position="28"/>
    </location>
</feature>
<feature type="strand" evidence="20">
    <location>
        <begin position="33"/>
        <end position="39"/>
    </location>
</feature>
<feature type="strand" evidence="20">
    <location>
        <begin position="42"/>
        <end position="44"/>
    </location>
</feature>
<feature type="strand" evidence="20">
    <location>
        <begin position="52"/>
        <end position="61"/>
    </location>
</feature>
<feature type="strand" evidence="21">
    <location>
        <begin position="66"/>
        <end position="70"/>
    </location>
</feature>
<feature type="strand" evidence="20">
    <location>
        <begin position="73"/>
        <end position="75"/>
    </location>
</feature>
<feature type="strand" evidence="20">
    <location>
        <begin position="77"/>
        <end position="80"/>
    </location>
</feature>
<feature type="strand" evidence="20">
    <location>
        <begin position="83"/>
        <end position="86"/>
    </location>
</feature>
<feature type="helix" evidence="20">
    <location>
        <begin position="88"/>
        <end position="94"/>
    </location>
</feature>
<feature type="strand" evidence="20">
    <location>
        <begin position="102"/>
        <end position="107"/>
    </location>
</feature>
<feature type="helix" evidence="20">
    <location>
        <begin position="109"/>
        <end position="111"/>
    </location>
</feature>
<feature type="turn" evidence="20">
    <location>
        <begin position="112"/>
        <end position="116"/>
    </location>
</feature>
<feature type="turn" evidence="20">
    <location>
        <begin position="119"/>
        <end position="121"/>
    </location>
</feature>
<feature type="strand" evidence="20">
    <location>
        <begin position="128"/>
        <end position="138"/>
    </location>
</feature>
<feature type="strand" evidence="19">
    <location>
        <begin position="144"/>
        <end position="154"/>
    </location>
</feature>
<feature type="strand" evidence="19">
    <location>
        <begin position="167"/>
        <end position="176"/>
    </location>
</feature>
<feature type="strand" evidence="19">
    <location>
        <begin position="179"/>
        <end position="189"/>
    </location>
</feature>
<feature type="helix" evidence="19">
    <location>
        <begin position="193"/>
        <end position="196"/>
    </location>
</feature>
<feature type="helix" evidence="19">
    <location>
        <begin position="200"/>
        <end position="206"/>
    </location>
</feature>
<feature type="strand" evidence="19">
    <location>
        <begin position="214"/>
        <end position="219"/>
    </location>
</feature>
<feature type="turn" evidence="19">
    <location>
        <begin position="221"/>
        <end position="223"/>
    </location>
</feature>
<feature type="helix" evidence="18">
    <location>
        <begin position="226"/>
        <end position="228"/>
    </location>
</feature>
<feature type="helix" evidence="19">
    <location>
        <begin position="231"/>
        <end position="233"/>
    </location>
</feature>
<feature type="turn" evidence="23">
    <location>
        <begin position="236"/>
        <end position="239"/>
    </location>
</feature>
<feature type="strand" evidence="19">
    <location>
        <begin position="241"/>
        <end position="251"/>
    </location>
</feature>
<feature type="helix" evidence="19">
    <location>
        <begin position="256"/>
        <end position="258"/>
    </location>
</feature>
<feature type="helix" evidence="19">
    <location>
        <begin position="261"/>
        <end position="280"/>
    </location>
</feature>
<feature type="helix" evidence="19">
    <location>
        <begin position="284"/>
        <end position="298"/>
    </location>
</feature>
<feature type="helix" evidence="19">
    <location>
        <begin position="306"/>
        <end position="329"/>
    </location>
</feature>
<feature type="helix" evidence="19">
    <location>
        <begin position="333"/>
        <end position="346"/>
    </location>
</feature>
<feature type="helix" evidence="19">
    <location>
        <begin position="351"/>
        <end position="363"/>
    </location>
</feature>
<feature type="helix" evidence="19">
    <location>
        <begin position="367"/>
        <end position="380"/>
    </location>
</feature>
<feature type="helix" evidence="19">
    <location>
        <begin position="385"/>
        <end position="423"/>
    </location>
</feature>
<organism>
    <name type="scientific">Homo sapiens</name>
    <name type="common">Human</name>
    <dbReference type="NCBI Taxonomy" id="9606"/>
    <lineage>
        <taxon>Eukaryota</taxon>
        <taxon>Metazoa</taxon>
        <taxon>Chordata</taxon>
        <taxon>Craniata</taxon>
        <taxon>Vertebrata</taxon>
        <taxon>Euteleostomi</taxon>
        <taxon>Mammalia</taxon>
        <taxon>Eutheria</taxon>
        <taxon>Euarchontoglires</taxon>
        <taxon>Primates</taxon>
        <taxon>Haplorrhini</taxon>
        <taxon>Catarrhini</taxon>
        <taxon>Hominidae</taxon>
        <taxon>Homo</taxon>
    </lineage>
</organism>
<comment type="function">
    <text evidence="4 5 6 7 8 9">Immunophilin protein with PPIase and co-chaperone activities (PubMed:11350175). Component of unligated steroid receptors heterocomplexes through interaction with heat-shock protein 90 (HSP90). Plays a role in the intracellular trafficking of heterooligomeric forms of steroid hormone receptors maintaining the complex into the cytoplasm when unliganded (PubMed:12538866). Acts as a regulator of Akt/AKT1 activity by promoting the interaction between Akt/AKT1 and PHLPP1, thereby enhancing dephosphorylation and subsequent activation of Akt/AKT1 (PubMed:28147277, PubMed:28363942). Interacts with IKBKE and IKBKB which facilitates IKK complex assembly leading to increased IKBKE and IKBKB kinase activity, NF-kappa-B activation, and IFN production (PubMed:26101251, PubMed:31434731).</text>
</comment>
<comment type="catalytic activity">
    <reaction evidence="4">
        <text>[protein]-peptidylproline (omega=180) = [protein]-peptidylproline (omega=0)</text>
        <dbReference type="Rhea" id="RHEA:16237"/>
        <dbReference type="Rhea" id="RHEA-COMP:10747"/>
        <dbReference type="Rhea" id="RHEA-COMP:10748"/>
        <dbReference type="ChEBI" id="CHEBI:83833"/>
        <dbReference type="ChEBI" id="CHEBI:83834"/>
        <dbReference type="EC" id="5.2.1.8"/>
    </reaction>
</comment>
<comment type="activity regulation">
    <text evidence="1">Inhibited by both FK506 and rapamycin.</text>
</comment>
<comment type="subunit">
    <text evidence="1 7 9 10">Part of a heteromultimeric cytoplasmic complex with HSP90AA1, HSPA1A/HSPA1B and steroid receptors. Upon ligand binding dissociates from the complex and FKBP4 takes its place (By similarity). Interacts with functionally mature heterooligomeric progesterone receptor complexes along with HSP90 and TEBP (PubMed:7693698). Interacts with NR3C1 (By similarity). Interacts with Akt/AKT1 and PHLPP1; enhancing dephosphorylation and subsequent activation of Akt/AKT1 (PubMed:28147277). Interacts with IFI44L; this interaction modulates the kinase activity of IKBKB and IKBKE (PubMed:31434731). Interacts with IKBKB and IKBKE (PubMed:26101251, PubMed:31434731).</text>
</comment>
<comment type="interaction">
    <interactant intactId="EBI-306914">
        <id>Q13451</id>
    </interactant>
    <interactant intactId="EBI-1051975">
        <id>Q96Q40</id>
        <label>CDK15</label>
    </interactant>
    <organismsDiffer>false</organismsDiffer>
    <experiments>5</experiments>
</comment>
<comment type="interaction">
    <interactant intactId="EBI-306914">
        <id>Q13451</id>
    </interactant>
    <interactant intactId="EBI-1383449">
        <id>P50750</id>
        <label>CDK9</label>
    </interactant>
    <organismsDiffer>false</organismsDiffer>
    <experiments>10</experiments>
</comment>
<comment type="interaction">
    <interactant intactId="EBI-306914">
        <id>Q13451</id>
    </interactant>
    <interactant intactId="EBI-81249">
        <id>O15111</id>
        <label>CHUK</label>
    </interactant>
    <organismsDiffer>false</organismsDiffer>
    <experiments>5</experiments>
</comment>
<comment type="interaction">
    <interactant intactId="EBI-306914">
        <id>Q13451</id>
    </interactant>
    <interactant intactId="EBI-6381479">
        <id>Q9UPZ9</id>
        <label>CILK1</label>
    </interactant>
    <organismsDiffer>false</organismsDiffer>
    <experiments>3</experiments>
</comment>
<comment type="interaction">
    <interactant intactId="EBI-306914">
        <id>Q13451</id>
    </interactant>
    <interactant intactId="EBI-297353">
        <id>P00533</id>
        <label>EGFR</label>
    </interactant>
    <organismsDiffer>false</organismsDiffer>
    <experiments>2</experiments>
</comment>
<comment type="interaction">
    <interactant intactId="EBI-306914">
        <id>Q13451</id>
    </interactant>
    <interactant intactId="EBI-296047">
        <id>P07900</id>
        <label>HSP90AA1</label>
    </interactant>
    <organismsDiffer>false</organismsDiffer>
    <experiments>9</experiments>
</comment>
<comment type="interaction">
    <interactant intactId="EBI-306914">
        <id>Q13451</id>
    </interactant>
    <interactant intactId="EBI-352572">
        <id>P08238</id>
        <label>HSP90AB1</label>
    </interactant>
    <organismsDiffer>false</organismsDiffer>
    <experiments>17</experiments>
</comment>
<comment type="interaction">
    <interactant intactId="EBI-306914">
        <id>Q13451</id>
    </interactant>
    <interactant intactId="EBI-6424389">
        <id>Q6VAB6</id>
        <label>KSR2</label>
    </interactant>
    <organismsDiffer>false</organismsDiffer>
    <experiments>7</experiments>
</comment>
<comment type="interaction">
    <interactant intactId="EBI-306914">
        <id>Q13451</id>
    </interactant>
    <interactant intactId="EBI-366233">
        <id>P10636-8</id>
        <label>MAPT</label>
    </interactant>
    <organismsDiffer>false</organismsDiffer>
    <experiments>8</experiments>
</comment>
<comment type="interaction">
    <interactant intactId="EBI-306914">
        <id>Q13451</id>
    </interactant>
    <interactant intactId="EBI-355924">
        <id>P33993</id>
        <label>MCM7</label>
    </interactant>
    <organismsDiffer>false</organismsDiffer>
    <experiments>2</experiments>
</comment>
<comment type="interaction">
    <interactant intactId="EBI-306914">
        <id>Q13451</id>
    </interactant>
    <interactant intactId="EBI-9384556">
        <id>Q9BTE3-2</id>
        <label>MCMBP</label>
    </interactant>
    <organismsDiffer>false</organismsDiffer>
    <experiments>4</experiments>
</comment>
<comment type="interaction">
    <interactant intactId="EBI-306914">
        <id>Q13451</id>
    </interactant>
    <interactant intactId="EBI-1757866">
        <id>P00540</id>
        <label>MOS</label>
    </interactant>
    <organismsDiffer>false</organismsDiffer>
    <experiments>5</experiments>
</comment>
<comment type="interaction">
    <interactant intactId="EBI-306914">
        <id>Q13451</id>
    </interactant>
    <interactant intactId="EBI-1047231">
        <id>P11216</id>
        <label>PYGB</label>
    </interactant>
    <organismsDiffer>false</organismsDiffer>
    <experiments>2</experiments>
</comment>
<comment type="interaction">
    <interactant intactId="EBI-306914">
        <id>Q13451</id>
    </interactant>
    <interactant intactId="EBI-1042854">
        <id>O00141</id>
        <label>SGK1</label>
    </interactant>
    <organismsDiffer>false</organismsDiffer>
    <experiments>2</experiments>
</comment>
<comment type="interaction">
    <interactant intactId="EBI-306914">
        <id>Q13451</id>
    </interactant>
    <interactant intactId="EBI-306838">
        <id>Q15831</id>
        <label>STK11</label>
    </interactant>
    <organismsDiffer>false</organismsDiffer>
    <experiments>10</experiments>
</comment>
<comment type="interaction">
    <interactant intactId="EBI-306914">
        <id>Q13451</id>
    </interactant>
    <interactant intactId="EBI-1383475">
        <id>Q6PHR2</id>
        <label>ULK3</label>
    </interactant>
    <organismsDiffer>false</organismsDiffer>
    <experiments>3</experiments>
</comment>
<comment type="interaction">
    <interactant intactId="EBI-306914">
        <id>Q13451</id>
    </interactant>
    <interactant intactId="EBI-2511022">
        <id>Q70CQ1</id>
        <label>USP49</label>
    </interactant>
    <organismsDiffer>false</organismsDiffer>
    <experiments>2</experiments>
</comment>
<comment type="interaction">
    <interactant intactId="EBI-306914">
        <id>Q13451</id>
    </interactant>
    <interactant intactId="EBI-9005440">
        <id>PRO_0000037552</id>
        <dbReference type="UniProtKB" id="Q9WMX2"/>
    </interactant>
    <organismsDiffer>true</organismsDiffer>
    <experiments>4</experiments>
</comment>
<comment type="subcellular location">
    <subcellularLocation>
        <location evidence="1">Cytoplasm</location>
    </subcellularLocation>
    <subcellularLocation>
        <location evidence="1">Nucleus</location>
    </subcellularLocation>
</comment>
<comment type="alternative products">
    <event type="alternative splicing"/>
    <isoform>
        <id>Q13451-1</id>
        <name>1</name>
        <sequence type="displayed"/>
    </isoform>
    <isoform>
        <id>Q13451-2</id>
        <name>2</name>
        <sequence type="described" ref="VSP_044820 VSP_044821"/>
    </isoform>
</comment>
<comment type="tissue specificity">
    <text>Widely expressed, enriched in testis compared to other tissues.</text>
</comment>
<comment type="induction">
    <text>By androgen.</text>
</comment>
<comment type="PTM">
    <text evidence="7">Acetylation impairs ability to promote interaction between Akt/AKT1 and PHLPP1 (PubMed:28147277). Deacetylation by SIRT7 promotes interaction between Akt/AKT1 and PHLPP1, leading to suppress Akt/AKT1 activation (PubMed:28147277).</text>
</comment>
<comment type="PTM">
    <text evidence="8">Ubiquitinated, leading to degradation in a proteasome-dependent manner. Deubiquitinated by USP49, leading to stabilization.</text>
</comment>
<comment type="sequence caution" evidence="13">
    <conflict type="frameshift">
        <sequence resource="EMBL-CDS" id="BAD93130"/>
    </conflict>
</comment>
<proteinExistence type="evidence at protein level"/>
<accession>Q13451</accession>
<accession>F5H7R1</accession>
<accession>Q59EB8</accession>
<accession>Q5TGM6</accession>
<dbReference type="EC" id="5.2.1.8" evidence="4"/>
<dbReference type="EMBL" id="U71321">
    <property type="protein sequence ID" value="AAC51189.1"/>
    <property type="molecule type" value="mRNA"/>
</dbReference>
<dbReference type="EMBL" id="AF194172">
    <property type="protein sequence ID" value="AAL54872.1"/>
    <property type="molecule type" value="mRNA"/>
</dbReference>
<dbReference type="EMBL" id="AK312422">
    <property type="protein sequence ID" value="BAG35332.1"/>
    <property type="molecule type" value="mRNA"/>
</dbReference>
<dbReference type="EMBL" id="AB209893">
    <property type="protein sequence ID" value="BAD93130.1"/>
    <property type="status" value="ALT_FRAME"/>
    <property type="molecule type" value="mRNA"/>
</dbReference>
<dbReference type="EMBL" id="AL033519">
    <property type="status" value="NOT_ANNOTATED_CDS"/>
    <property type="molecule type" value="Genomic_DNA"/>
</dbReference>
<dbReference type="EMBL" id="AL157823">
    <property type="status" value="NOT_ANNOTATED_CDS"/>
    <property type="molecule type" value="Genomic_DNA"/>
</dbReference>
<dbReference type="EMBL" id="AL590400">
    <property type="status" value="NOT_ANNOTATED_CDS"/>
    <property type="molecule type" value="Genomic_DNA"/>
</dbReference>
<dbReference type="EMBL" id="CH471081">
    <property type="protein sequence ID" value="EAX03842.1"/>
    <property type="molecule type" value="Genomic_DNA"/>
</dbReference>
<dbReference type="EMBL" id="BC042605">
    <property type="protein sequence ID" value="AAH42605.1"/>
    <property type="molecule type" value="mRNA"/>
</dbReference>
<dbReference type="EMBL" id="U42031">
    <property type="protein sequence ID" value="AAA86245.1"/>
    <property type="molecule type" value="mRNA"/>
</dbReference>
<dbReference type="CCDS" id="CCDS4808.1">
    <molecule id="Q13451-1"/>
</dbReference>
<dbReference type="CCDS" id="CCDS54996.1">
    <molecule id="Q13451-2"/>
</dbReference>
<dbReference type="PIR" id="JC5422">
    <property type="entry name" value="JC5422"/>
</dbReference>
<dbReference type="RefSeq" id="NP_001139247.1">
    <molecule id="Q13451-1"/>
    <property type="nucleotide sequence ID" value="NM_001145775.3"/>
</dbReference>
<dbReference type="RefSeq" id="NP_001139248.1">
    <molecule id="Q13451-1"/>
    <property type="nucleotide sequence ID" value="NM_001145776.2"/>
</dbReference>
<dbReference type="RefSeq" id="NP_001139249.1">
    <molecule id="Q13451-2"/>
    <property type="nucleotide sequence ID" value="NM_001145777.2"/>
</dbReference>
<dbReference type="RefSeq" id="NP_004108.1">
    <molecule id="Q13451-1"/>
    <property type="nucleotide sequence ID" value="NM_004117.4"/>
</dbReference>
<dbReference type="PDB" id="1KT0">
    <property type="method" value="X-ray"/>
    <property type="resolution" value="2.70 A"/>
    <property type="chains" value="A=1-457"/>
</dbReference>
<dbReference type="PDB" id="3O5D">
    <property type="method" value="X-ray"/>
    <property type="resolution" value="4.00 A"/>
    <property type="chains" value="A/B=1-260"/>
</dbReference>
<dbReference type="PDB" id="3O5E">
    <property type="method" value="X-ray"/>
    <property type="resolution" value="1.60 A"/>
    <property type="chains" value="A=1-140"/>
</dbReference>
<dbReference type="PDB" id="3O5F">
    <property type="method" value="X-ray"/>
    <property type="resolution" value="1.65 A"/>
    <property type="chains" value="A=1-140"/>
</dbReference>
<dbReference type="PDB" id="3O5G">
    <property type="method" value="X-ray"/>
    <property type="resolution" value="2.00 A"/>
    <property type="chains" value="A=16-140"/>
</dbReference>
<dbReference type="PDB" id="3O5I">
    <property type="method" value="X-ray"/>
    <property type="resolution" value="1.80 A"/>
    <property type="chains" value="A/B=16-140"/>
</dbReference>
<dbReference type="PDB" id="3O5J">
    <property type="method" value="X-ray"/>
    <property type="resolution" value="1.70 A"/>
    <property type="chains" value="A=16-140"/>
</dbReference>
<dbReference type="PDB" id="3O5K">
    <property type="method" value="X-ray"/>
    <property type="resolution" value="2.70 A"/>
    <property type="chains" value="A/B/C/D=16-140"/>
</dbReference>
<dbReference type="PDB" id="3O5L">
    <property type="method" value="X-ray"/>
    <property type="resolution" value="1.30 A"/>
    <property type="chains" value="A=16-140"/>
</dbReference>
<dbReference type="PDB" id="3O5M">
    <property type="method" value="X-ray"/>
    <property type="resolution" value="1.60 A"/>
    <property type="chains" value="A/B=16-140"/>
</dbReference>
<dbReference type="PDB" id="3O5O">
    <property type="method" value="X-ray"/>
    <property type="resolution" value="1.15 A"/>
    <property type="chains" value="A=16-140"/>
</dbReference>
<dbReference type="PDB" id="3O5P">
    <property type="method" value="X-ray"/>
    <property type="resolution" value="1.00 A"/>
    <property type="chains" value="A=16-140"/>
</dbReference>
<dbReference type="PDB" id="3O5Q">
    <property type="method" value="X-ray"/>
    <property type="resolution" value="0.96 A"/>
    <property type="chains" value="A=16-140"/>
</dbReference>
<dbReference type="PDB" id="3O5R">
    <property type="method" value="X-ray"/>
    <property type="resolution" value="1.10 A"/>
    <property type="chains" value="A=16-140"/>
</dbReference>
<dbReference type="PDB" id="4DRH">
    <property type="method" value="X-ray"/>
    <property type="resolution" value="2.30 A"/>
    <property type="chains" value="A/D=1-140"/>
</dbReference>
<dbReference type="PDB" id="4DRI">
    <property type="method" value="X-ray"/>
    <property type="resolution" value="1.45 A"/>
    <property type="chains" value="A=1-140"/>
</dbReference>
<dbReference type="PDB" id="4DRK">
    <property type="method" value="X-ray"/>
    <property type="resolution" value="1.50 A"/>
    <property type="chains" value="A/B=16-140"/>
</dbReference>
<dbReference type="PDB" id="4DRM">
    <property type="method" value="X-ray"/>
    <property type="resolution" value="1.48 A"/>
    <property type="chains" value="A=16-140"/>
</dbReference>
<dbReference type="PDB" id="4DRN">
    <property type="method" value="X-ray"/>
    <property type="resolution" value="1.07 A"/>
    <property type="chains" value="A=16-140"/>
</dbReference>
<dbReference type="PDB" id="4DRO">
    <property type="method" value="X-ray"/>
    <property type="resolution" value="1.10 A"/>
    <property type="chains" value="A=16-140"/>
</dbReference>
<dbReference type="PDB" id="4DRP">
    <property type="method" value="X-ray"/>
    <property type="resolution" value="1.80 A"/>
    <property type="chains" value="A=16-140"/>
</dbReference>
<dbReference type="PDB" id="4DRQ">
    <property type="method" value="X-ray"/>
    <property type="resolution" value="1.00 A"/>
    <property type="chains" value="A=16-140"/>
</dbReference>
<dbReference type="PDB" id="4JFI">
    <property type="method" value="X-ray"/>
    <property type="resolution" value="1.05 A"/>
    <property type="chains" value="A=16-139"/>
</dbReference>
<dbReference type="PDB" id="4JFJ">
    <property type="method" value="X-ray"/>
    <property type="resolution" value="1.08 A"/>
    <property type="chains" value="A=16-140"/>
</dbReference>
<dbReference type="PDB" id="4JFK">
    <property type="method" value="X-ray"/>
    <property type="resolution" value="1.15 A"/>
    <property type="chains" value="A=16-140"/>
</dbReference>
<dbReference type="PDB" id="4JFL">
    <property type="method" value="X-ray"/>
    <property type="resolution" value="1.20 A"/>
    <property type="chains" value="A=16-140"/>
</dbReference>
<dbReference type="PDB" id="4JFM">
    <property type="method" value="X-ray"/>
    <property type="resolution" value="1.02 A"/>
    <property type="chains" value="A=16-140"/>
</dbReference>
<dbReference type="PDB" id="4R0X">
    <property type="method" value="X-ray"/>
    <property type="resolution" value="1.20 A"/>
    <property type="chains" value="A=20-140"/>
</dbReference>
<dbReference type="PDB" id="4TW6">
    <property type="method" value="X-ray"/>
    <property type="resolution" value="1.40 A"/>
    <property type="chains" value="A=16-140"/>
</dbReference>
<dbReference type="PDB" id="4TW7">
    <property type="method" value="X-ray"/>
    <property type="resolution" value="1.25 A"/>
    <property type="chains" value="A=16-140"/>
</dbReference>
<dbReference type="PDB" id="4TX0">
    <property type="method" value="X-ray"/>
    <property type="resolution" value="1.03 A"/>
    <property type="chains" value="A=16-140"/>
</dbReference>
<dbReference type="PDB" id="4W9O">
    <property type="method" value="X-ray"/>
    <property type="resolution" value="1.27 A"/>
    <property type="chains" value="A/E=16-140"/>
</dbReference>
<dbReference type="PDB" id="4W9P">
    <property type="method" value="X-ray"/>
    <property type="resolution" value="1.50 A"/>
    <property type="chains" value="A/E=16-140"/>
</dbReference>
<dbReference type="PDB" id="4W9Q">
    <property type="method" value="X-ray"/>
    <property type="resolution" value="1.08 A"/>
    <property type="chains" value="A=16-140"/>
</dbReference>
<dbReference type="PDB" id="5BXJ">
    <property type="method" value="X-ray"/>
    <property type="resolution" value="1.24 A"/>
    <property type="chains" value="A=16-140"/>
</dbReference>
<dbReference type="PDB" id="5DIT">
    <property type="method" value="X-ray"/>
    <property type="resolution" value="2.25 A"/>
    <property type="chains" value="A=16-140"/>
</dbReference>
<dbReference type="PDB" id="5DIU">
    <property type="method" value="X-ray"/>
    <property type="resolution" value="1.30 A"/>
    <property type="chains" value="A=16-140"/>
</dbReference>
<dbReference type="PDB" id="5DIV">
    <property type="method" value="X-ray"/>
    <property type="resolution" value="1.65 A"/>
    <property type="chains" value="A=16-139"/>
</dbReference>
<dbReference type="PDB" id="5NJX">
    <property type="method" value="X-ray"/>
    <property type="resolution" value="2.49 A"/>
    <property type="chains" value="A=1-457"/>
</dbReference>
<dbReference type="PDB" id="5OBK">
    <property type="method" value="X-ray"/>
    <property type="resolution" value="1.00 A"/>
    <property type="chains" value="A=16-140"/>
</dbReference>
<dbReference type="PDB" id="5OMP">
    <property type="method" value="X-ray"/>
    <property type="resolution" value="1.88 A"/>
    <property type="chains" value="A=1-457"/>
</dbReference>
<dbReference type="PDB" id="6SAF">
    <property type="method" value="X-ray"/>
    <property type="resolution" value="2.05 A"/>
    <property type="chains" value="A=16-140"/>
</dbReference>
<dbReference type="PDB" id="6TX4">
    <property type="method" value="X-ray"/>
    <property type="resolution" value="1.06 A"/>
    <property type="chains" value="A=16-140"/>
</dbReference>
<dbReference type="PDB" id="6TX5">
    <property type="method" value="X-ray"/>
    <property type="resolution" value="1.08 A"/>
    <property type="chains" value="A=16-140"/>
</dbReference>
<dbReference type="PDB" id="6TX6">
    <property type="method" value="X-ray"/>
    <property type="resolution" value="0.98 A"/>
    <property type="chains" value="A=16-140"/>
</dbReference>
<dbReference type="PDB" id="6TX7">
    <property type="method" value="X-ray"/>
    <property type="resolution" value="1.13 A"/>
    <property type="chains" value="A=16-140"/>
</dbReference>
<dbReference type="PDB" id="6TX8">
    <property type="method" value="X-ray"/>
    <property type="resolution" value="1.20 A"/>
    <property type="chains" value="A=16-140"/>
</dbReference>
<dbReference type="PDB" id="6TX9">
    <property type="method" value="X-ray"/>
    <property type="resolution" value="1.42 A"/>
    <property type="chains" value="A=16-140"/>
</dbReference>
<dbReference type="PDB" id="6TXX">
    <property type="method" value="X-ray"/>
    <property type="resolution" value="2.10 A"/>
    <property type="chains" value="A/B=16-140"/>
</dbReference>
<dbReference type="PDB" id="7A6W">
    <property type="method" value="X-ray"/>
    <property type="resolution" value="1.85 A"/>
    <property type="chains" value="AAA/BBB=16-140"/>
</dbReference>
<dbReference type="PDB" id="7A6X">
    <property type="method" value="X-ray"/>
    <property type="resolution" value="1.67 A"/>
    <property type="chains" value="AAA=16-140"/>
</dbReference>
<dbReference type="PDB" id="7AOT">
    <property type="method" value="X-ray"/>
    <property type="resolution" value="0.85 A"/>
    <property type="chains" value="A=16-140"/>
</dbReference>
<dbReference type="PDB" id="7AOU">
    <property type="method" value="X-ray"/>
    <property type="resolution" value="1.16 A"/>
    <property type="chains" value="A=16-140"/>
</dbReference>
<dbReference type="PDB" id="7APQ">
    <property type="method" value="X-ray"/>
    <property type="resolution" value="1.09 A"/>
    <property type="chains" value="A=16-140"/>
</dbReference>
<dbReference type="PDB" id="7APS">
    <property type="method" value="X-ray"/>
    <property type="resolution" value="0.94 A"/>
    <property type="chains" value="A/B=16-140"/>
</dbReference>
<dbReference type="PDB" id="7APT">
    <property type="method" value="X-ray"/>
    <property type="resolution" value="1.13 A"/>
    <property type="chains" value="A=16-140"/>
</dbReference>
<dbReference type="PDB" id="7APW">
    <property type="method" value="X-ray"/>
    <property type="resolution" value="0.89 A"/>
    <property type="chains" value="A=16-140"/>
</dbReference>
<dbReference type="PDB" id="7AWF">
    <property type="method" value="X-ray"/>
    <property type="resolution" value="1.40 A"/>
    <property type="chains" value="A=16-140"/>
</dbReference>
<dbReference type="PDB" id="7AWX">
    <property type="method" value="X-ray"/>
    <property type="resolution" value="2.20 A"/>
    <property type="chains" value="A/B=16-140"/>
</dbReference>
<dbReference type="PDB" id="7B9Y">
    <property type="method" value="X-ray"/>
    <property type="resolution" value="1.35 A"/>
    <property type="chains" value="A=16-140"/>
</dbReference>
<dbReference type="PDB" id="7B9Z">
    <property type="method" value="X-ray"/>
    <property type="resolution" value="1.44 A"/>
    <property type="chains" value="A=16-140"/>
</dbReference>
<dbReference type="PDB" id="7BA0">
    <property type="method" value="X-ray"/>
    <property type="resolution" value="1.14 A"/>
    <property type="chains" value="A=16-140"/>
</dbReference>
<dbReference type="PDB" id="7ETT">
    <property type="method" value="X-ray"/>
    <property type="resolution" value="1.50 A"/>
    <property type="chains" value="A=16-140"/>
</dbReference>
<dbReference type="PDB" id="7ETU">
    <property type="method" value="X-ray"/>
    <property type="resolution" value="1.39 A"/>
    <property type="chains" value="A=16-140"/>
</dbReference>
<dbReference type="PDB" id="7ETV">
    <property type="method" value="X-ray"/>
    <property type="resolution" value="1.31 A"/>
    <property type="chains" value="A=16-140"/>
</dbReference>
<dbReference type="PDB" id="7L7I">
    <property type="method" value="EM"/>
    <property type="resolution" value="3.30 A"/>
    <property type="chains" value="C=1-457"/>
</dbReference>
<dbReference type="PDB" id="7R0L">
    <property type="method" value="X-ray"/>
    <property type="resolution" value="1.10 A"/>
    <property type="chains" value="A=16-140"/>
</dbReference>
<dbReference type="PDB" id="8BA6">
    <property type="method" value="X-ray"/>
    <property type="resolution" value="1.10 A"/>
    <property type="chains" value="A=16-140"/>
</dbReference>
<dbReference type="PDB" id="8BAJ">
    <property type="method" value="X-ray"/>
    <property type="resolution" value="1.20 A"/>
    <property type="chains" value="A=16-140"/>
</dbReference>
<dbReference type="PDB" id="8CCA">
    <property type="method" value="X-ray"/>
    <property type="resolution" value="1.33 A"/>
    <property type="chains" value="A=16-140"/>
</dbReference>
<dbReference type="PDB" id="8CCB">
    <property type="method" value="X-ray"/>
    <property type="resolution" value="1.70 A"/>
    <property type="chains" value="A=16-140"/>
</dbReference>
<dbReference type="PDB" id="8CCC">
    <property type="method" value="X-ray"/>
    <property type="resolution" value="1.55 A"/>
    <property type="chains" value="A=16-140"/>
</dbReference>
<dbReference type="PDB" id="8CCD">
    <property type="method" value="X-ray"/>
    <property type="resolution" value="2.10 A"/>
    <property type="chains" value="A=16-140"/>
</dbReference>
<dbReference type="PDB" id="8CCE">
    <property type="method" value="X-ray"/>
    <property type="resolution" value="1.40 A"/>
    <property type="chains" value="A=16-140"/>
</dbReference>
<dbReference type="PDB" id="8CCF">
    <property type="method" value="X-ray"/>
    <property type="resolution" value="2.00 A"/>
    <property type="chains" value="A=16-140"/>
</dbReference>
<dbReference type="PDB" id="8CCG">
    <property type="method" value="X-ray"/>
    <property type="resolution" value="1.30 A"/>
    <property type="chains" value="A=16-140"/>
</dbReference>
<dbReference type="PDB" id="8CCH">
    <property type="method" value="X-ray"/>
    <property type="resolution" value="1.73 A"/>
    <property type="chains" value="A=16-140"/>
</dbReference>
<dbReference type="PDB" id="8CHN">
    <property type="method" value="X-ray"/>
    <property type="resolution" value="0.99 A"/>
    <property type="chains" value="A=16-140"/>
</dbReference>
<dbReference type="PDB" id="8CHP">
    <property type="method" value="X-ray"/>
    <property type="resolution" value="1.00 A"/>
    <property type="chains" value="A=16-140"/>
</dbReference>
<dbReference type="PDB" id="8CHQ">
    <property type="method" value="X-ray"/>
    <property type="resolution" value="1.01 A"/>
    <property type="chains" value="A=16-140"/>
</dbReference>
<dbReference type="PDB" id="8CHR">
    <property type="method" value="X-ray"/>
    <property type="resolution" value="1.10 A"/>
    <property type="chains" value="A=16-140"/>
</dbReference>
<dbReference type="PDB" id="8FFW">
    <property type="method" value="EM"/>
    <property type="resolution" value="3.23 A"/>
    <property type="chains" value="D=2-457"/>
</dbReference>
<dbReference type="PDB" id="8PC2">
    <property type="method" value="X-ray"/>
    <property type="resolution" value="2.80 A"/>
    <property type="chains" value="G/H=16-140"/>
</dbReference>
<dbReference type="PDB" id="8PJ8">
    <property type="method" value="X-ray"/>
    <property type="resolution" value="1.50 A"/>
    <property type="chains" value="A=16-140"/>
</dbReference>
<dbReference type="PDB" id="8PJA">
    <property type="method" value="X-ray"/>
    <property type="resolution" value="1.60 A"/>
    <property type="chains" value="A=16-140"/>
</dbReference>
<dbReference type="PDB" id="8R5K">
    <property type="method" value="X-ray"/>
    <property type="resolution" value="0.89 A"/>
    <property type="chains" value="A=16-140"/>
</dbReference>
<dbReference type="PDB" id="9EU6">
    <property type="method" value="X-ray"/>
    <property type="resolution" value="1.54 A"/>
    <property type="chains" value="A/B=16-140"/>
</dbReference>
<dbReference type="PDB" id="9EU7">
    <property type="method" value="X-ray"/>
    <property type="resolution" value="2.21 A"/>
    <property type="chains" value="A/B=16-140"/>
</dbReference>
<dbReference type="PDB" id="9EU8">
    <property type="method" value="X-ray"/>
    <property type="resolution" value="2.30 A"/>
    <property type="chains" value="A/B=16-140"/>
</dbReference>
<dbReference type="PDB" id="9EU9">
    <property type="method" value="X-ray"/>
    <property type="resolution" value="1.80 A"/>
    <property type="chains" value="A/B=16-140"/>
</dbReference>
<dbReference type="PDB" id="9EUA">
    <property type="method" value="X-ray"/>
    <property type="resolution" value="2.50 A"/>
    <property type="chains" value="A/B=16-140"/>
</dbReference>
<dbReference type="PDB" id="9EUB">
    <property type="method" value="X-ray"/>
    <property type="resolution" value="2.00 A"/>
    <property type="chains" value="A/B=16-140"/>
</dbReference>
<dbReference type="PDB" id="9EUC">
    <property type="method" value="X-ray"/>
    <property type="resolution" value="2.40 A"/>
    <property type="chains" value="A/B=16-140"/>
</dbReference>
<dbReference type="PDB" id="9EUD">
    <property type="method" value="X-ray"/>
    <property type="resolution" value="2.02 A"/>
    <property type="chains" value="A/B=16-140"/>
</dbReference>
<dbReference type="PDB" id="9EUE">
    <property type="method" value="X-ray"/>
    <property type="resolution" value="2.00 A"/>
    <property type="chains" value="A/B=16-140"/>
</dbReference>
<dbReference type="PDB" id="9EY3">
    <property type="method" value="X-ray"/>
    <property type="resolution" value="1.16 A"/>
    <property type="chains" value="A=16-140"/>
</dbReference>
<dbReference type="PDB" id="9EY4">
    <property type="method" value="X-ray"/>
    <property type="resolution" value="1.16 A"/>
    <property type="chains" value="A=16-140"/>
</dbReference>
<dbReference type="PDB" id="9GPK">
    <property type="method" value="X-ray"/>
    <property type="resolution" value="1.75 A"/>
    <property type="chains" value="A/B=16-140"/>
</dbReference>
<dbReference type="PDB" id="9GPL">
    <property type="method" value="X-ray"/>
    <property type="resolution" value="1.80 A"/>
    <property type="chains" value="A/B=16-140"/>
</dbReference>
<dbReference type="PDB" id="9GPM">
    <property type="method" value="X-ray"/>
    <property type="resolution" value="1.55 A"/>
    <property type="chains" value="A/B=16-140"/>
</dbReference>
<dbReference type="PDB" id="9GPN">
    <property type="method" value="X-ray"/>
    <property type="resolution" value="1.80 A"/>
    <property type="chains" value="A/B=16-140"/>
</dbReference>
<dbReference type="PDB" id="9GPO">
    <property type="method" value="X-ray"/>
    <property type="resolution" value="1.68 A"/>
    <property type="chains" value="A/B=16-140"/>
</dbReference>
<dbReference type="PDB" id="9GPP">
    <property type="method" value="X-ray"/>
    <property type="resolution" value="2.10 A"/>
    <property type="chains" value="A/B=16-140"/>
</dbReference>
<dbReference type="PDB" id="9GPQ">
    <property type="method" value="X-ray"/>
    <property type="resolution" value="1.35 A"/>
    <property type="chains" value="A/B=16-140"/>
</dbReference>
<dbReference type="PDB" id="9GPR">
    <property type="method" value="X-ray"/>
    <property type="resolution" value="1.75 A"/>
    <property type="chains" value="A/B=16-140"/>
</dbReference>
<dbReference type="PDB" id="9GPS">
    <property type="method" value="X-ray"/>
    <property type="resolution" value="1.90 A"/>
    <property type="chains" value="A/B=16-140"/>
</dbReference>
<dbReference type="PDB" id="9GPT">
    <property type="method" value="X-ray"/>
    <property type="resolution" value="2.00 A"/>
    <property type="chains" value="A/B=16-140"/>
</dbReference>
<dbReference type="PDB" id="9GPU">
    <property type="method" value="X-ray"/>
    <property type="resolution" value="1.36 A"/>
    <property type="chains" value="A/B=16-140"/>
</dbReference>
<dbReference type="PDB" id="9GPV">
    <property type="method" value="X-ray"/>
    <property type="resolution" value="1.70 A"/>
    <property type="chains" value="A/B=16-140"/>
</dbReference>
<dbReference type="PDB" id="9GPW">
    <property type="method" value="X-ray"/>
    <property type="resolution" value="1.74 A"/>
    <property type="chains" value="A/B=16-140"/>
</dbReference>
<dbReference type="PDB" id="9GPX">
    <property type="method" value="X-ray"/>
    <property type="resolution" value="1.80 A"/>
    <property type="chains" value="A/B=16-140"/>
</dbReference>
<dbReference type="PDB" id="9GPY">
    <property type="method" value="X-ray"/>
    <property type="resolution" value="1.50 A"/>
    <property type="chains" value="A/B/C=16-140"/>
</dbReference>
<dbReference type="PDB" id="9GPZ">
    <property type="method" value="X-ray"/>
    <property type="resolution" value="1.80 A"/>
    <property type="chains" value="A/B=16-140"/>
</dbReference>
<dbReference type="PDB" id="9GQ2">
    <property type="method" value="X-ray"/>
    <property type="resolution" value="2.30 A"/>
    <property type="chains" value="A/B=16-140"/>
</dbReference>
<dbReference type="PDB" id="9GQ3">
    <property type="method" value="X-ray"/>
    <property type="resolution" value="2.30 A"/>
    <property type="chains" value="A/B=16-140"/>
</dbReference>
<dbReference type="PDB" id="9GQ4">
    <property type="method" value="X-ray"/>
    <property type="resolution" value="1.80 A"/>
    <property type="chains" value="A/B=16-140"/>
</dbReference>
<dbReference type="PDB" id="9GQ5">
    <property type="method" value="X-ray"/>
    <property type="resolution" value="1.93 A"/>
    <property type="chains" value="A/B=16-140"/>
</dbReference>
<dbReference type="PDB" id="9GQ6">
    <property type="method" value="X-ray"/>
    <property type="resolution" value="1.88 A"/>
    <property type="chains" value="A/B=16-140"/>
</dbReference>
<dbReference type="PDB" id="9GQ7">
    <property type="method" value="X-ray"/>
    <property type="resolution" value="2.30 A"/>
    <property type="chains" value="A/B=16-140"/>
</dbReference>
<dbReference type="PDB" id="9GQ8">
    <property type="method" value="X-ray"/>
    <property type="resolution" value="2.16 A"/>
    <property type="chains" value="A/B=16-140"/>
</dbReference>
<dbReference type="PDB" id="9GQ9">
    <property type="method" value="X-ray"/>
    <property type="resolution" value="2.00 A"/>
    <property type="chains" value="A/B=16-140"/>
</dbReference>
<dbReference type="PDB" id="9GQA">
    <property type="method" value="X-ray"/>
    <property type="resolution" value="1.93 A"/>
    <property type="chains" value="A/B=16-140"/>
</dbReference>
<dbReference type="PDB" id="9GQB">
    <property type="method" value="X-ray"/>
    <property type="resolution" value="2.00 A"/>
    <property type="chains" value="A/B=16-140"/>
</dbReference>
<dbReference type="PDB" id="9GQC">
    <property type="method" value="X-ray"/>
    <property type="resolution" value="2.50 A"/>
    <property type="chains" value="A/B=16-140"/>
</dbReference>
<dbReference type="PDB" id="9GQD">
    <property type="method" value="X-ray"/>
    <property type="resolution" value="2.50 A"/>
    <property type="chains" value="A/B=16-140"/>
</dbReference>
<dbReference type="PDB" id="9GQE">
    <property type="method" value="X-ray"/>
    <property type="resolution" value="2.50 A"/>
    <property type="chains" value="A/B=16-140"/>
</dbReference>
<dbReference type="PDB" id="9GQF">
    <property type="method" value="X-ray"/>
    <property type="resolution" value="1.80 A"/>
    <property type="chains" value="A/B=16-140"/>
</dbReference>
<dbReference type="PDB" id="9GQG">
    <property type="method" value="X-ray"/>
    <property type="resolution" value="2.00 A"/>
    <property type="chains" value="A/B=16-140"/>
</dbReference>
<dbReference type="PDB" id="9GQH">
    <property type="method" value="X-ray"/>
    <property type="resolution" value="2.60 A"/>
    <property type="chains" value="A/B=16-140"/>
</dbReference>
<dbReference type="PDB" id="9GQI">
    <property type="method" value="X-ray"/>
    <property type="resolution" value="1.50 A"/>
    <property type="chains" value="A/B=16-140"/>
</dbReference>
<dbReference type="PDB" id="9GQJ">
    <property type="method" value="X-ray"/>
    <property type="resolution" value="1.65 A"/>
    <property type="chains" value="A/B=16-140"/>
</dbReference>
<dbReference type="PDB" id="9GQK">
    <property type="method" value="X-ray"/>
    <property type="resolution" value="1.70 A"/>
    <property type="chains" value="A/B=16-140"/>
</dbReference>
<dbReference type="PDBsum" id="1KT0"/>
<dbReference type="PDBsum" id="3O5D"/>
<dbReference type="PDBsum" id="3O5E"/>
<dbReference type="PDBsum" id="3O5F"/>
<dbReference type="PDBsum" id="3O5G"/>
<dbReference type="PDBsum" id="3O5I"/>
<dbReference type="PDBsum" id="3O5J"/>
<dbReference type="PDBsum" id="3O5K"/>
<dbReference type="PDBsum" id="3O5L"/>
<dbReference type="PDBsum" id="3O5M"/>
<dbReference type="PDBsum" id="3O5O"/>
<dbReference type="PDBsum" id="3O5P"/>
<dbReference type="PDBsum" id="3O5Q"/>
<dbReference type="PDBsum" id="3O5R"/>
<dbReference type="PDBsum" id="4DRH"/>
<dbReference type="PDBsum" id="4DRI"/>
<dbReference type="PDBsum" id="4DRK"/>
<dbReference type="PDBsum" id="4DRM"/>
<dbReference type="PDBsum" id="4DRN"/>
<dbReference type="PDBsum" id="4DRO"/>
<dbReference type="PDBsum" id="4DRP"/>
<dbReference type="PDBsum" id="4DRQ"/>
<dbReference type="PDBsum" id="4JFI"/>
<dbReference type="PDBsum" id="4JFJ"/>
<dbReference type="PDBsum" id="4JFK"/>
<dbReference type="PDBsum" id="4JFL"/>
<dbReference type="PDBsum" id="4JFM"/>
<dbReference type="PDBsum" id="4R0X"/>
<dbReference type="PDBsum" id="4TW6"/>
<dbReference type="PDBsum" id="4TW7"/>
<dbReference type="PDBsum" id="4TX0"/>
<dbReference type="PDBsum" id="4W9O"/>
<dbReference type="PDBsum" id="4W9P"/>
<dbReference type="PDBsum" id="4W9Q"/>
<dbReference type="PDBsum" id="5BXJ"/>
<dbReference type="PDBsum" id="5DIT"/>
<dbReference type="PDBsum" id="5DIU"/>
<dbReference type="PDBsum" id="5DIV"/>
<dbReference type="PDBsum" id="5NJX"/>
<dbReference type="PDBsum" id="5OBK"/>
<dbReference type="PDBsum" id="5OMP"/>
<dbReference type="PDBsum" id="6SAF"/>
<dbReference type="PDBsum" id="6TX4"/>
<dbReference type="PDBsum" id="6TX5"/>
<dbReference type="PDBsum" id="6TX6"/>
<dbReference type="PDBsum" id="6TX7"/>
<dbReference type="PDBsum" id="6TX8"/>
<dbReference type="PDBsum" id="6TX9"/>
<dbReference type="PDBsum" id="6TXX"/>
<dbReference type="PDBsum" id="7A6W"/>
<dbReference type="PDBsum" id="7A6X"/>
<dbReference type="PDBsum" id="7AOT"/>
<dbReference type="PDBsum" id="7AOU"/>
<dbReference type="PDBsum" id="7APQ"/>
<dbReference type="PDBsum" id="7APS"/>
<dbReference type="PDBsum" id="7APT"/>
<dbReference type="PDBsum" id="7APW"/>
<dbReference type="PDBsum" id="7AWF"/>
<dbReference type="PDBsum" id="7AWX"/>
<dbReference type="PDBsum" id="7B9Y"/>
<dbReference type="PDBsum" id="7B9Z"/>
<dbReference type="PDBsum" id="7BA0"/>
<dbReference type="PDBsum" id="7ETT"/>
<dbReference type="PDBsum" id="7ETU"/>
<dbReference type="PDBsum" id="7ETV"/>
<dbReference type="PDBsum" id="7L7I"/>
<dbReference type="PDBsum" id="7R0L"/>
<dbReference type="PDBsum" id="8BA6"/>
<dbReference type="PDBsum" id="8BAJ"/>
<dbReference type="PDBsum" id="8CCA"/>
<dbReference type="PDBsum" id="8CCB"/>
<dbReference type="PDBsum" id="8CCC"/>
<dbReference type="PDBsum" id="8CCD"/>
<dbReference type="PDBsum" id="8CCE"/>
<dbReference type="PDBsum" id="8CCF"/>
<dbReference type="PDBsum" id="8CCG"/>
<dbReference type="PDBsum" id="8CCH"/>
<dbReference type="PDBsum" id="8CHN"/>
<dbReference type="PDBsum" id="8CHP"/>
<dbReference type="PDBsum" id="8CHQ"/>
<dbReference type="PDBsum" id="8CHR"/>
<dbReference type="PDBsum" id="8FFW"/>
<dbReference type="PDBsum" id="8PC2"/>
<dbReference type="PDBsum" id="8PJ8"/>
<dbReference type="PDBsum" id="8PJA"/>
<dbReference type="PDBsum" id="8R5K"/>
<dbReference type="PDBsum" id="9EU6"/>
<dbReference type="PDBsum" id="9EU7"/>
<dbReference type="PDBsum" id="9EU8"/>
<dbReference type="PDBsum" id="9EU9"/>
<dbReference type="PDBsum" id="9EUA"/>
<dbReference type="PDBsum" id="9EUB"/>
<dbReference type="PDBsum" id="9EUC"/>
<dbReference type="PDBsum" id="9EUD"/>
<dbReference type="PDBsum" id="9EUE"/>
<dbReference type="PDBsum" id="9EY3"/>
<dbReference type="PDBsum" id="9EY4"/>
<dbReference type="PDBsum" id="9GPK"/>
<dbReference type="PDBsum" id="9GPL"/>
<dbReference type="PDBsum" id="9GPM"/>
<dbReference type="PDBsum" id="9GPN"/>
<dbReference type="PDBsum" id="9GPO"/>
<dbReference type="PDBsum" id="9GPP"/>
<dbReference type="PDBsum" id="9GPQ"/>
<dbReference type="PDBsum" id="9GPR"/>
<dbReference type="PDBsum" id="9GPS"/>
<dbReference type="PDBsum" id="9GPT"/>
<dbReference type="PDBsum" id="9GPU"/>
<dbReference type="PDBsum" id="9GPV"/>
<dbReference type="PDBsum" id="9GPW"/>
<dbReference type="PDBsum" id="9GPX"/>
<dbReference type="PDBsum" id="9GPY"/>
<dbReference type="PDBsum" id="9GPZ"/>
<dbReference type="PDBsum" id="9GQ2"/>
<dbReference type="PDBsum" id="9GQ3"/>
<dbReference type="PDBsum" id="9GQ4"/>
<dbReference type="PDBsum" id="9GQ5"/>
<dbReference type="PDBsum" id="9GQ6"/>
<dbReference type="PDBsum" id="9GQ7"/>
<dbReference type="PDBsum" id="9GQ8"/>
<dbReference type="PDBsum" id="9GQ9"/>
<dbReference type="PDBsum" id="9GQA"/>
<dbReference type="PDBsum" id="9GQB"/>
<dbReference type="PDBsum" id="9GQC"/>
<dbReference type="PDBsum" id="9GQD"/>
<dbReference type="PDBsum" id="9GQE"/>
<dbReference type="PDBsum" id="9GQF"/>
<dbReference type="PDBsum" id="9GQG"/>
<dbReference type="PDBsum" id="9GQH"/>
<dbReference type="PDBsum" id="9GQI"/>
<dbReference type="PDBsum" id="9GQJ"/>
<dbReference type="PDBsum" id="9GQK"/>
<dbReference type="EMDB" id="EMD-23213"/>
<dbReference type="EMDB" id="EMD-29069"/>
<dbReference type="SMR" id="Q13451"/>
<dbReference type="BioGRID" id="108579">
    <property type="interactions" value="431"/>
</dbReference>
<dbReference type="CORUM" id="Q13451"/>
<dbReference type="DIP" id="DIP-27597N"/>
<dbReference type="FunCoup" id="Q13451">
    <property type="interactions" value="2990"/>
</dbReference>
<dbReference type="IntAct" id="Q13451">
    <property type="interactions" value="373"/>
</dbReference>
<dbReference type="MINT" id="Q13451"/>
<dbReference type="STRING" id="9606.ENSP00000444810"/>
<dbReference type="BindingDB" id="Q13451"/>
<dbReference type="ChEMBL" id="CHEMBL2052031"/>
<dbReference type="DrugCentral" id="Q13451"/>
<dbReference type="GuidetoPHARMACOLOGY" id="3175"/>
<dbReference type="GlyGen" id="Q13451">
    <property type="glycosylation" value="1 site, 1 O-linked glycan (1 site)"/>
</dbReference>
<dbReference type="iPTMnet" id="Q13451"/>
<dbReference type="MetOSite" id="Q13451"/>
<dbReference type="PhosphoSitePlus" id="Q13451"/>
<dbReference type="SwissPalm" id="Q13451"/>
<dbReference type="BioMuta" id="FKBP5"/>
<dbReference type="DMDM" id="2851536"/>
<dbReference type="CPTAC" id="CPTAC-506"/>
<dbReference type="CPTAC" id="CPTAC-507"/>
<dbReference type="jPOST" id="Q13451"/>
<dbReference type="MassIVE" id="Q13451"/>
<dbReference type="PaxDb" id="9606-ENSP00000444810"/>
<dbReference type="PeptideAtlas" id="Q13451"/>
<dbReference type="ProteomicsDB" id="27564"/>
<dbReference type="ProteomicsDB" id="59455">
    <molecule id="Q13451-1"/>
</dbReference>
<dbReference type="Pumba" id="Q13451"/>
<dbReference type="Antibodypedia" id="3988">
    <property type="antibodies" value="460 antibodies from 36 providers"/>
</dbReference>
<dbReference type="DNASU" id="2289"/>
<dbReference type="Ensembl" id="ENST00000357266.9">
    <molecule id="Q13451-1"/>
    <property type="protein sequence ID" value="ENSP00000349811.3"/>
    <property type="gene ID" value="ENSG00000096060.15"/>
</dbReference>
<dbReference type="Ensembl" id="ENST00000536438.5">
    <molecule id="Q13451-1"/>
    <property type="protein sequence ID" value="ENSP00000444810.1"/>
    <property type="gene ID" value="ENSG00000096060.15"/>
</dbReference>
<dbReference type="Ensembl" id="ENST00000539068.5">
    <molecule id="Q13451-1"/>
    <property type="protein sequence ID" value="ENSP00000441205.1"/>
    <property type="gene ID" value="ENSG00000096060.15"/>
</dbReference>
<dbReference type="Ensembl" id="ENST00000542713.1">
    <molecule id="Q13451-2"/>
    <property type="protein sequence ID" value="ENSP00000442340.1"/>
    <property type="gene ID" value="ENSG00000096060.15"/>
</dbReference>
<dbReference type="GeneID" id="2289"/>
<dbReference type="KEGG" id="hsa:2289"/>
<dbReference type="MANE-Select" id="ENST00000357266.9">
    <property type="protein sequence ID" value="ENSP00000349811.3"/>
    <property type="RefSeq nucleotide sequence ID" value="NM_004117.4"/>
    <property type="RefSeq protein sequence ID" value="NP_004108.1"/>
</dbReference>
<dbReference type="UCSC" id="uc003okx.3">
    <molecule id="Q13451-1"/>
    <property type="organism name" value="human"/>
</dbReference>
<dbReference type="AGR" id="HGNC:3721"/>
<dbReference type="CTD" id="2289"/>
<dbReference type="DisGeNET" id="2289"/>
<dbReference type="GeneCards" id="FKBP5"/>
<dbReference type="HGNC" id="HGNC:3721">
    <property type="gene designation" value="FKBP5"/>
</dbReference>
<dbReference type="HPA" id="ENSG00000096060">
    <property type="expression patterns" value="Tissue enhanced (skeletal muscle, tongue)"/>
</dbReference>
<dbReference type="MalaCards" id="FKBP5"/>
<dbReference type="MIM" id="602623">
    <property type="type" value="gene"/>
</dbReference>
<dbReference type="neXtProt" id="NX_Q13451"/>
<dbReference type="OpenTargets" id="ENSG00000096060"/>
<dbReference type="PharmGKB" id="PA28162"/>
<dbReference type="VEuPathDB" id="HostDB:ENSG00000096060"/>
<dbReference type="eggNOG" id="KOG0543">
    <property type="taxonomic scope" value="Eukaryota"/>
</dbReference>
<dbReference type="GeneTree" id="ENSGT00940000158726"/>
<dbReference type="HOGENOM" id="CLU_013615_13_1_1"/>
<dbReference type="InParanoid" id="Q13451"/>
<dbReference type="OMA" id="QAILTIH"/>
<dbReference type="OrthoDB" id="433738at2759"/>
<dbReference type="PAN-GO" id="Q13451">
    <property type="GO annotations" value="4 GO annotations based on evolutionary models"/>
</dbReference>
<dbReference type="PhylomeDB" id="Q13451"/>
<dbReference type="TreeFam" id="TF105292"/>
<dbReference type="PathwayCommons" id="Q13451"/>
<dbReference type="Reactome" id="R-HSA-3371497">
    <property type="pathway name" value="HSP90 chaperone cycle for steroid hormone receptors (SHR) in the presence of ligand"/>
</dbReference>
<dbReference type="Reactome" id="R-HSA-8939211">
    <property type="pathway name" value="ESR-mediated signaling"/>
</dbReference>
<dbReference type="Reactome" id="R-HSA-9022699">
    <property type="pathway name" value="MECP2 regulates neuronal receptors and channels"/>
</dbReference>
<dbReference type="Reactome" id="R-HSA-9909505">
    <property type="pathway name" value="Modulation of host responses by IFN-stimulated genes"/>
</dbReference>
<dbReference type="SignaLink" id="Q13451"/>
<dbReference type="SIGNOR" id="Q13451"/>
<dbReference type="BioGRID-ORCS" id="2289">
    <property type="hits" value="13 hits in 1167 CRISPR screens"/>
</dbReference>
<dbReference type="ChiTaRS" id="FKBP5">
    <property type="organism name" value="human"/>
</dbReference>
<dbReference type="EvolutionaryTrace" id="Q13451"/>
<dbReference type="GeneWiki" id="FKBP5"/>
<dbReference type="GenomeRNAi" id="2289"/>
<dbReference type="Pharos" id="Q13451">
    <property type="development level" value="Tchem"/>
</dbReference>
<dbReference type="PRO" id="PR:Q13451"/>
<dbReference type="Proteomes" id="UP000005640">
    <property type="component" value="Chromosome 6"/>
</dbReference>
<dbReference type="RNAct" id="Q13451">
    <property type="molecule type" value="protein"/>
</dbReference>
<dbReference type="Bgee" id="ENSG00000096060">
    <property type="expression patterns" value="Expressed in mucosa of stomach and 192 other cell types or tissues"/>
</dbReference>
<dbReference type="GO" id="GO:0005737">
    <property type="term" value="C:cytoplasm"/>
    <property type="evidence" value="ECO:0000318"/>
    <property type="project" value="GO_Central"/>
</dbReference>
<dbReference type="GO" id="GO:0005829">
    <property type="term" value="C:cytosol"/>
    <property type="evidence" value="ECO:0000314"/>
    <property type="project" value="HPA"/>
</dbReference>
<dbReference type="GO" id="GO:0070062">
    <property type="term" value="C:extracellular exosome"/>
    <property type="evidence" value="ECO:0007005"/>
    <property type="project" value="UniProtKB"/>
</dbReference>
<dbReference type="GO" id="GO:0016020">
    <property type="term" value="C:membrane"/>
    <property type="evidence" value="ECO:0007005"/>
    <property type="project" value="UniProtKB"/>
</dbReference>
<dbReference type="GO" id="GO:0005654">
    <property type="term" value="C:nucleoplasm"/>
    <property type="evidence" value="ECO:0000314"/>
    <property type="project" value="HPA"/>
</dbReference>
<dbReference type="GO" id="GO:0005528">
    <property type="term" value="F:FK506 binding"/>
    <property type="evidence" value="ECO:0000304"/>
    <property type="project" value="ProtInc"/>
</dbReference>
<dbReference type="GO" id="GO:0031072">
    <property type="term" value="F:heat shock protein binding"/>
    <property type="evidence" value="ECO:0000353"/>
    <property type="project" value="UniProtKB"/>
</dbReference>
<dbReference type="GO" id="GO:0003755">
    <property type="term" value="F:peptidyl-prolyl cis-trans isomerase activity"/>
    <property type="evidence" value="ECO:0000314"/>
    <property type="project" value="UniProtKB"/>
</dbReference>
<dbReference type="GO" id="GO:0030674">
    <property type="term" value="F:protein-macromolecule adaptor activity"/>
    <property type="evidence" value="ECO:0000314"/>
    <property type="project" value="UniProt"/>
</dbReference>
<dbReference type="GO" id="GO:0061077">
    <property type="term" value="P:chaperone-mediated protein folding"/>
    <property type="evidence" value="ECO:0000314"/>
    <property type="project" value="UniProtKB"/>
</dbReference>
<dbReference type="GO" id="GO:0006457">
    <property type="term" value="P:protein folding"/>
    <property type="evidence" value="ECO:0000304"/>
    <property type="project" value="ProtInc"/>
</dbReference>
<dbReference type="GO" id="GO:0097305">
    <property type="term" value="P:response to alcohol"/>
    <property type="evidence" value="ECO:0007669"/>
    <property type="project" value="Ensembl"/>
</dbReference>
<dbReference type="GO" id="GO:0009617">
    <property type="term" value="P:response to bacterium"/>
    <property type="evidence" value="ECO:0007669"/>
    <property type="project" value="Ensembl"/>
</dbReference>
<dbReference type="GO" id="GO:0042220">
    <property type="term" value="P:response to cocaine"/>
    <property type="evidence" value="ECO:0007669"/>
    <property type="project" value="Ensembl"/>
</dbReference>
<dbReference type="DisProt" id="DP01845"/>
<dbReference type="FunFam" id="1.25.40.10:FF:000008">
    <property type="entry name" value="Peptidylprolyl isomerase"/>
    <property type="match status" value="1"/>
</dbReference>
<dbReference type="FunFam" id="3.10.50.40:FF:000011">
    <property type="entry name" value="Peptidylprolyl isomerase"/>
    <property type="match status" value="1"/>
</dbReference>
<dbReference type="FunFam" id="3.10.50.40:FF:000013">
    <property type="entry name" value="Peptidylprolyl isomerase"/>
    <property type="match status" value="1"/>
</dbReference>
<dbReference type="Gene3D" id="3.10.50.40">
    <property type="match status" value="2"/>
</dbReference>
<dbReference type="Gene3D" id="1.25.40.10">
    <property type="entry name" value="Tetratricopeptide repeat domain"/>
    <property type="match status" value="1"/>
</dbReference>
<dbReference type="IDEAL" id="IID00073"/>
<dbReference type="InterPro" id="IPR050754">
    <property type="entry name" value="FKBP4/5/8-like"/>
</dbReference>
<dbReference type="InterPro" id="IPR046357">
    <property type="entry name" value="PPIase_dom_sf"/>
</dbReference>
<dbReference type="InterPro" id="IPR001179">
    <property type="entry name" value="PPIase_FKBP_dom"/>
</dbReference>
<dbReference type="InterPro" id="IPR011990">
    <property type="entry name" value="TPR-like_helical_dom_sf"/>
</dbReference>
<dbReference type="InterPro" id="IPR019734">
    <property type="entry name" value="TPR_rpt"/>
</dbReference>
<dbReference type="PANTHER" id="PTHR46512">
    <property type="entry name" value="PEPTIDYLPROLYL ISOMERASE"/>
    <property type="match status" value="1"/>
</dbReference>
<dbReference type="PANTHER" id="PTHR46512:SF9">
    <property type="entry name" value="PEPTIDYLPROLYL ISOMERASE"/>
    <property type="match status" value="1"/>
</dbReference>
<dbReference type="Pfam" id="PF00254">
    <property type="entry name" value="FKBP_C"/>
    <property type="match status" value="2"/>
</dbReference>
<dbReference type="Pfam" id="PF00515">
    <property type="entry name" value="TPR_1"/>
    <property type="match status" value="1"/>
</dbReference>
<dbReference type="Pfam" id="PF13181">
    <property type="entry name" value="TPR_8"/>
    <property type="match status" value="1"/>
</dbReference>
<dbReference type="SMART" id="SM00028">
    <property type="entry name" value="TPR"/>
    <property type="match status" value="2"/>
</dbReference>
<dbReference type="SUPFAM" id="SSF54534">
    <property type="entry name" value="FKBP-like"/>
    <property type="match status" value="2"/>
</dbReference>
<dbReference type="SUPFAM" id="SSF48452">
    <property type="entry name" value="TPR-like"/>
    <property type="match status" value="1"/>
</dbReference>
<dbReference type="PROSITE" id="PS50059">
    <property type="entry name" value="FKBP_PPIASE"/>
    <property type="match status" value="2"/>
</dbReference>
<dbReference type="PROSITE" id="PS50005">
    <property type="entry name" value="TPR"/>
    <property type="match status" value="3"/>
</dbReference>
<dbReference type="PROSITE" id="PS50293">
    <property type="entry name" value="TPR_REGION"/>
    <property type="match status" value="1"/>
</dbReference>
<sequence>MTTDEGAKNNEESPTATVAEQGEDITSKKDRGVLKIVKRVGNGEETPMIGDKVYVHYKGKLSNGKKFDSSHDRNEPFVFSLGKGQVIKAWDIGVATMKKGEICHLLCKPEYAYGSAGSLPKIPSNATLFFEIELLDFKGEDLFEDGGIIRRTKRKGEGYSNPNEGATVEIHLEGRCGGRMFDCRDVAFTVGEGEDHDIPIGIDKALEKMQREEQCILYLGPRYGFGEAGKPKFGIEPNAELIYEVTLKSFEKAKESWEMDTKEKLEQAAIVKEKGTVYFKGGKYMQAVIQYGKIVSWLEMEYGLSEKESKASESFLLAAFLNLAMCYLKLREYTKAVECCDKALGLDSANEKGLYRRGEAQLLMNEFESAKGDFEKVLEVNPQNKAARLQISMCQKKAKEHNERDRRIYANMFKKFAEQDAKEEANKAMGKKTSEGVTNEKGTDSQAMEEEKPEGHV</sequence>
<evidence type="ECO:0000250" key="1">
    <source>
        <dbReference type="UniProtKB" id="Q64378"/>
    </source>
</evidence>
<evidence type="ECO:0000255" key="2">
    <source>
        <dbReference type="PROSITE-ProRule" id="PRU00277"/>
    </source>
</evidence>
<evidence type="ECO:0000256" key="3">
    <source>
        <dbReference type="SAM" id="MobiDB-lite"/>
    </source>
</evidence>
<evidence type="ECO:0000269" key="4">
    <source>
    </source>
</evidence>
<evidence type="ECO:0000269" key="5">
    <source>
    </source>
</evidence>
<evidence type="ECO:0000269" key="6">
    <source>
    </source>
</evidence>
<evidence type="ECO:0000269" key="7">
    <source>
    </source>
</evidence>
<evidence type="ECO:0000269" key="8">
    <source>
    </source>
</evidence>
<evidence type="ECO:0000269" key="9">
    <source>
    </source>
</evidence>
<evidence type="ECO:0000269" key="10">
    <source>
    </source>
</evidence>
<evidence type="ECO:0000303" key="11">
    <source>
    </source>
</evidence>
<evidence type="ECO:0000303" key="12">
    <source ref="4"/>
</evidence>
<evidence type="ECO:0000305" key="13"/>
<evidence type="ECO:0007744" key="14">
    <source>
    </source>
</evidence>
<evidence type="ECO:0007744" key="15">
    <source>
    </source>
</evidence>
<evidence type="ECO:0007744" key="16">
    <source>
    </source>
</evidence>
<evidence type="ECO:0007829" key="17">
    <source>
        <dbReference type="PDB" id="4DRH"/>
    </source>
</evidence>
<evidence type="ECO:0007829" key="18">
    <source>
        <dbReference type="PDB" id="5NJX"/>
    </source>
</evidence>
<evidence type="ECO:0007829" key="19">
    <source>
        <dbReference type="PDB" id="5OMP"/>
    </source>
</evidence>
<evidence type="ECO:0007829" key="20">
    <source>
        <dbReference type="PDB" id="7AOT"/>
    </source>
</evidence>
<evidence type="ECO:0007829" key="21">
    <source>
        <dbReference type="PDB" id="7APW"/>
    </source>
</evidence>
<evidence type="ECO:0007829" key="22">
    <source>
        <dbReference type="PDB" id="7BA0"/>
    </source>
</evidence>
<evidence type="ECO:0007829" key="23">
    <source>
        <dbReference type="PDB" id="8FFW"/>
    </source>
</evidence>
<gene>
    <name type="primary">FKBP5</name>
    <name type="synonym">AIG6</name>
    <name evidence="11" type="synonym">FKBP51</name>
</gene>
<reference key="1">
    <citation type="journal article" date="1997" name="Biochem. Biophys. Res. Commun.">
        <title>Tissue distribution and abundance of human FKBP51, an FK506-binding protein that can mediate calcineurin inhibition.</title>
        <authorList>
            <person name="Baughman G."/>
            <person name="Wiederrecht G.J."/>
            <person name="Chang F."/>
            <person name="Martin M.M."/>
            <person name="Bourgeois S."/>
        </authorList>
    </citation>
    <scope>NUCLEOTIDE SEQUENCE [MRNA] (ISOFORM 1)</scope>
    <source>
        <tissue>Thymus</tissue>
    </source>
</reference>
<reference key="2">
    <citation type="submission" date="1999-08" db="EMBL/GenBank/DDBJ databases">
        <title>Identification of AIG6 as an androgen response gene in human prostate cancer cell line LNCaP.</title>
        <authorList>
            <person name="Zhang J.S."/>
            <person name="Smith D.I."/>
        </authorList>
    </citation>
    <scope>NUCLEOTIDE SEQUENCE [MRNA] (ISOFORM 1)</scope>
</reference>
<reference key="3">
    <citation type="journal article" date="2004" name="Nat. Genet.">
        <title>Complete sequencing and characterization of 21,243 full-length human cDNAs.</title>
        <authorList>
            <person name="Ota T."/>
            <person name="Suzuki Y."/>
            <person name="Nishikawa T."/>
            <person name="Otsuki T."/>
            <person name="Sugiyama T."/>
            <person name="Irie R."/>
            <person name="Wakamatsu A."/>
            <person name="Hayashi K."/>
            <person name="Sato H."/>
            <person name="Nagai K."/>
            <person name="Kimura K."/>
            <person name="Makita H."/>
            <person name="Sekine M."/>
            <person name="Obayashi M."/>
            <person name="Nishi T."/>
            <person name="Shibahara T."/>
            <person name="Tanaka T."/>
            <person name="Ishii S."/>
            <person name="Yamamoto J."/>
            <person name="Saito K."/>
            <person name="Kawai Y."/>
            <person name="Isono Y."/>
            <person name="Nakamura Y."/>
            <person name="Nagahari K."/>
            <person name="Murakami K."/>
            <person name="Yasuda T."/>
            <person name="Iwayanagi T."/>
            <person name="Wagatsuma M."/>
            <person name="Shiratori A."/>
            <person name="Sudo H."/>
            <person name="Hosoiri T."/>
            <person name="Kaku Y."/>
            <person name="Kodaira H."/>
            <person name="Kondo H."/>
            <person name="Sugawara M."/>
            <person name="Takahashi M."/>
            <person name="Kanda K."/>
            <person name="Yokoi T."/>
            <person name="Furuya T."/>
            <person name="Kikkawa E."/>
            <person name="Omura Y."/>
            <person name="Abe K."/>
            <person name="Kamihara K."/>
            <person name="Katsuta N."/>
            <person name="Sato K."/>
            <person name="Tanikawa M."/>
            <person name="Yamazaki M."/>
            <person name="Ninomiya K."/>
            <person name="Ishibashi T."/>
            <person name="Yamashita H."/>
            <person name="Murakawa K."/>
            <person name="Fujimori K."/>
            <person name="Tanai H."/>
            <person name="Kimata M."/>
            <person name="Watanabe M."/>
            <person name="Hiraoka S."/>
            <person name="Chiba Y."/>
            <person name="Ishida S."/>
            <person name="Ono Y."/>
            <person name="Takiguchi S."/>
            <person name="Watanabe S."/>
            <person name="Yosida M."/>
            <person name="Hotuta T."/>
            <person name="Kusano J."/>
            <person name="Kanehori K."/>
            <person name="Takahashi-Fujii A."/>
            <person name="Hara H."/>
            <person name="Tanase T.-O."/>
            <person name="Nomura Y."/>
            <person name="Togiya S."/>
            <person name="Komai F."/>
            <person name="Hara R."/>
            <person name="Takeuchi K."/>
            <person name="Arita M."/>
            <person name="Imose N."/>
            <person name="Musashino K."/>
            <person name="Yuuki H."/>
            <person name="Oshima A."/>
            <person name="Sasaki N."/>
            <person name="Aotsuka S."/>
            <person name="Yoshikawa Y."/>
            <person name="Matsunawa H."/>
            <person name="Ichihara T."/>
            <person name="Shiohata N."/>
            <person name="Sano S."/>
            <person name="Moriya S."/>
            <person name="Momiyama H."/>
            <person name="Satoh N."/>
            <person name="Takami S."/>
            <person name="Terashima Y."/>
            <person name="Suzuki O."/>
            <person name="Nakagawa S."/>
            <person name="Senoh A."/>
            <person name="Mizoguchi H."/>
            <person name="Goto Y."/>
            <person name="Shimizu F."/>
            <person name="Wakebe H."/>
            <person name="Hishigaki H."/>
            <person name="Watanabe T."/>
            <person name="Sugiyama A."/>
            <person name="Takemoto M."/>
            <person name="Kawakami B."/>
            <person name="Yamazaki M."/>
            <person name="Watanabe K."/>
            <person name="Kumagai A."/>
            <person name="Itakura S."/>
            <person name="Fukuzumi Y."/>
            <person name="Fujimori Y."/>
            <person name="Komiyama M."/>
            <person name="Tashiro H."/>
            <person name="Tanigami A."/>
            <person name="Fujiwara T."/>
            <person name="Ono T."/>
            <person name="Yamada K."/>
            <person name="Fujii Y."/>
            <person name="Ozaki K."/>
            <person name="Hirao M."/>
            <person name="Ohmori Y."/>
            <person name="Kawabata A."/>
            <person name="Hikiji T."/>
            <person name="Kobatake N."/>
            <person name="Inagaki H."/>
            <person name="Ikema Y."/>
            <person name="Okamoto S."/>
            <person name="Okitani R."/>
            <person name="Kawakami T."/>
            <person name="Noguchi S."/>
            <person name="Itoh T."/>
            <person name="Shigeta K."/>
            <person name="Senba T."/>
            <person name="Matsumura K."/>
            <person name="Nakajima Y."/>
            <person name="Mizuno T."/>
            <person name="Morinaga M."/>
            <person name="Sasaki M."/>
            <person name="Togashi T."/>
            <person name="Oyama M."/>
            <person name="Hata H."/>
            <person name="Watanabe M."/>
            <person name="Komatsu T."/>
            <person name="Mizushima-Sugano J."/>
            <person name="Satoh T."/>
            <person name="Shirai Y."/>
            <person name="Takahashi Y."/>
            <person name="Nakagawa K."/>
            <person name="Okumura K."/>
            <person name="Nagase T."/>
            <person name="Nomura N."/>
            <person name="Kikuchi H."/>
            <person name="Masuho Y."/>
            <person name="Yamashita R."/>
            <person name="Nakai K."/>
            <person name="Yada T."/>
            <person name="Nakamura Y."/>
            <person name="Ohara O."/>
            <person name="Isogai T."/>
            <person name="Sugano S."/>
        </authorList>
    </citation>
    <scope>NUCLEOTIDE SEQUENCE [LARGE SCALE MRNA] (ISOFORM 1)</scope>
    <source>
        <tissue>Brain</tissue>
    </source>
</reference>
<reference key="4">
    <citation type="submission" date="2005-03" db="EMBL/GenBank/DDBJ databases">
        <title>Homo sapiens protein coding cDNA.</title>
        <authorList>
            <person name="Totoki Y."/>
            <person name="Toyoda A."/>
            <person name="Takeda T."/>
            <person name="Sakaki Y."/>
            <person name="Tanaka A."/>
            <person name="Yokoyama S."/>
            <person name="Ohara O."/>
            <person name="Nagase T."/>
            <person name="Kikuno R.F."/>
        </authorList>
    </citation>
    <scope>NUCLEOTIDE SEQUENCE [LARGE SCALE MRNA] (ISOFORM 2)</scope>
    <source>
        <tissue>Aortic endothelium</tissue>
    </source>
</reference>
<reference key="5">
    <citation type="journal article" date="2003" name="Nature">
        <title>The DNA sequence and analysis of human chromosome 6.</title>
        <authorList>
            <person name="Mungall A.J."/>
            <person name="Palmer S.A."/>
            <person name="Sims S.K."/>
            <person name="Edwards C.A."/>
            <person name="Ashurst J.L."/>
            <person name="Wilming L."/>
            <person name="Jones M.C."/>
            <person name="Horton R."/>
            <person name="Hunt S.E."/>
            <person name="Scott C.E."/>
            <person name="Gilbert J.G.R."/>
            <person name="Clamp M.E."/>
            <person name="Bethel G."/>
            <person name="Milne S."/>
            <person name="Ainscough R."/>
            <person name="Almeida J.P."/>
            <person name="Ambrose K.D."/>
            <person name="Andrews T.D."/>
            <person name="Ashwell R.I.S."/>
            <person name="Babbage A.K."/>
            <person name="Bagguley C.L."/>
            <person name="Bailey J."/>
            <person name="Banerjee R."/>
            <person name="Barker D.J."/>
            <person name="Barlow K.F."/>
            <person name="Bates K."/>
            <person name="Beare D.M."/>
            <person name="Beasley H."/>
            <person name="Beasley O."/>
            <person name="Bird C.P."/>
            <person name="Blakey S.E."/>
            <person name="Bray-Allen S."/>
            <person name="Brook J."/>
            <person name="Brown A.J."/>
            <person name="Brown J.Y."/>
            <person name="Burford D.C."/>
            <person name="Burrill W."/>
            <person name="Burton J."/>
            <person name="Carder C."/>
            <person name="Carter N.P."/>
            <person name="Chapman J.C."/>
            <person name="Clark S.Y."/>
            <person name="Clark G."/>
            <person name="Clee C.M."/>
            <person name="Clegg S."/>
            <person name="Cobley V."/>
            <person name="Collier R.E."/>
            <person name="Collins J.E."/>
            <person name="Colman L.K."/>
            <person name="Corby N.R."/>
            <person name="Coville G.J."/>
            <person name="Culley K.M."/>
            <person name="Dhami P."/>
            <person name="Davies J."/>
            <person name="Dunn M."/>
            <person name="Earthrowl M.E."/>
            <person name="Ellington A.E."/>
            <person name="Evans K.A."/>
            <person name="Faulkner L."/>
            <person name="Francis M.D."/>
            <person name="Frankish A."/>
            <person name="Frankland J."/>
            <person name="French L."/>
            <person name="Garner P."/>
            <person name="Garnett J."/>
            <person name="Ghori M.J."/>
            <person name="Gilby L.M."/>
            <person name="Gillson C.J."/>
            <person name="Glithero R.J."/>
            <person name="Grafham D.V."/>
            <person name="Grant M."/>
            <person name="Gribble S."/>
            <person name="Griffiths C."/>
            <person name="Griffiths M.N.D."/>
            <person name="Hall R."/>
            <person name="Halls K.S."/>
            <person name="Hammond S."/>
            <person name="Harley J.L."/>
            <person name="Hart E.A."/>
            <person name="Heath P.D."/>
            <person name="Heathcott R."/>
            <person name="Holmes S.J."/>
            <person name="Howden P.J."/>
            <person name="Howe K.L."/>
            <person name="Howell G.R."/>
            <person name="Huckle E."/>
            <person name="Humphray S.J."/>
            <person name="Humphries M.D."/>
            <person name="Hunt A.R."/>
            <person name="Johnson C.M."/>
            <person name="Joy A.A."/>
            <person name="Kay M."/>
            <person name="Keenan S.J."/>
            <person name="Kimberley A.M."/>
            <person name="King A."/>
            <person name="Laird G.K."/>
            <person name="Langford C."/>
            <person name="Lawlor S."/>
            <person name="Leongamornlert D.A."/>
            <person name="Leversha M."/>
            <person name="Lloyd C.R."/>
            <person name="Lloyd D.M."/>
            <person name="Loveland J.E."/>
            <person name="Lovell J."/>
            <person name="Martin S."/>
            <person name="Mashreghi-Mohammadi M."/>
            <person name="Maslen G.L."/>
            <person name="Matthews L."/>
            <person name="McCann O.T."/>
            <person name="McLaren S.J."/>
            <person name="McLay K."/>
            <person name="McMurray A."/>
            <person name="Moore M.J.F."/>
            <person name="Mullikin J.C."/>
            <person name="Niblett D."/>
            <person name="Nickerson T."/>
            <person name="Novik K.L."/>
            <person name="Oliver K."/>
            <person name="Overton-Larty E.K."/>
            <person name="Parker A."/>
            <person name="Patel R."/>
            <person name="Pearce A.V."/>
            <person name="Peck A.I."/>
            <person name="Phillimore B.J.C.T."/>
            <person name="Phillips S."/>
            <person name="Plumb R.W."/>
            <person name="Porter K.M."/>
            <person name="Ramsey Y."/>
            <person name="Ranby S.A."/>
            <person name="Rice C.M."/>
            <person name="Ross M.T."/>
            <person name="Searle S.M."/>
            <person name="Sehra H.K."/>
            <person name="Sheridan E."/>
            <person name="Skuce C.D."/>
            <person name="Smith S."/>
            <person name="Smith M."/>
            <person name="Spraggon L."/>
            <person name="Squares S.L."/>
            <person name="Steward C.A."/>
            <person name="Sycamore N."/>
            <person name="Tamlyn-Hall G."/>
            <person name="Tester J."/>
            <person name="Theaker A.J."/>
            <person name="Thomas D.W."/>
            <person name="Thorpe A."/>
            <person name="Tracey A."/>
            <person name="Tromans A."/>
            <person name="Tubby B."/>
            <person name="Wall M."/>
            <person name="Wallis J.M."/>
            <person name="West A.P."/>
            <person name="White S.S."/>
            <person name="Whitehead S.L."/>
            <person name="Whittaker H."/>
            <person name="Wild A."/>
            <person name="Willey D.J."/>
            <person name="Wilmer T.E."/>
            <person name="Wood J.M."/>
            <person name="Wray P.W."/>
            <person name="Wyatt J.C."/>
            <person name="Young L."/>
            <person name="Younger R.M."/>
            <person name="Bentley D.R."/>
            <person name="Coulson A."/>
            <person name="Durbin R.M."/>
            <person name="Hubbard T."/>
            <person name="Sulston J.E."/>
            <person name="Dunham I."/>
            <person name="Rogers J."/>
            <person name="Beck S."/>
        </authorList>
    </citation>
    <scope>NUCLEOTIDE SEQUENCE [LARGE SCALE GENOMIC DNA]</scope>
</reference>
<reference key="6">
    <citation type="submission" date="2005-07" db="EMBL/GenBank/DDBJ databases">
        <authorList>
            <person name="Mural R.J."/>
            <person name="Istrail S."/>
            <person name="Sutton G."/>
            <person name="Florea L."/>
            <person name="Halpern A.L."/>
            <person name="Mobarry C.M."/>
            <person name="Lippert R."/>
            <person name="Walenz B."/>
            <person name="Shatkay H."/>
            <person name="Dew I."/>
            <person name="Miller J.R."/>
            <person name="Flanigan M.J."/>
            <person name="Edwards N.J."/>
            <person name="Bolanos R."/>
            <person name="Fasulo D."/>
            <person name="Halldorsson B.V."/>
            <person name="Hannenhalli S."/>
            <person name="Turner R."/>
            <person name="Yooseph S."/>
            <person name="Lu F."/>
            <person name="Nusskern D.R."/>
            <person name="Shue B.C."/>
            <person name="Zheng X.H."/>
            <person name="Zhong F."/>
            <person name="Delcher A.L."/>
            <person name="Huson D.H."/>
            <person name="Kravitz S.A."/>
            <person name="Mouchard L."/>
            <person name="Reinert K."/>
            <person name="Remington K.A."/>
            <person name="Clark A.G."/>
            <person name="Waterman M.S."/>
            <person name="Eichler E.E."/>
            <person name="Adams M.D."/>
            <person name="Hunkapiller M.W."/>
            <person name="Myers E.W."/>
            <person name="Venter J.C."/>
        </authorList>
    </citation>
    <scope>NUCLEOTIDE SEQUENCE [LARGE SCALE GENOMIC DNA]</scope>
</reference>
<reference key="7">
    <citation type="journal article" date="2004" name="Genome Res.">
        <title>The status, quality, and expansion of the NIH full-length cDNA project: the Mammalian Gene Collection (MGC).</title>
        <authorList>
            <consortium name="The MGC Project Team"/>
        </authorList>
    </citation>
    <scope>NUCLEOTIDE SEQUENCE [LARGE SCALE MRNA] (ISOFORM 1)</scope>
    <source>
        <tissue>Testis</tissue>
    </source>
</reference>
<reference key="8">
    <citation type="journal article" date="1997" name="Mol. Cell. Biol.">
        <title>Molecular cloning of human FKBP51 and comparisons of immunophilin interactions with Hsp90 and progesterone receptor.</title>
        <authorList>
            <person name="Nair S.C."/>
            <person name="Rimerman R.A."/>
            <person name="Toran E.J."/>
            <person name="Chen S."/>
            <person name="Prapapanich V."/>
            <person name="Butts R.N."/>
            <person name="Smith D.F."/>
        </authorList>
    </citation>
    <scope>NUCLEOTIDE SEQUENCE [MRNA] OF 9-457 (ISOFORM 1)</scope>
</reference>
<reference key="9">
    <citation type="journal article" date="1993" name="J. Biol. Chem.">
        <title>FKBP54, a novel FK506-binding protein in avian progesterone receptor complexes and HeLa extracts.</title>
        <authorList>
            <person name="Smith D.F."/>
            <person name="Albers M.W."/>
            <person name="Schreiber S.L."/>
            <person name="Leach K.L."/>
            <person name="Deibel M.R. Jr."/>
        </authorList>
    </citation>
    <scope>SUBUNIT</scope>
</reference>
<reference key="10">
    <citation type="journal article" date="2001" name="J. Mol. Biol.">
        <title>Functional analysis of the Hsp90-associated human peptidyl prolyl cis/trans isomerases FKBP51, FKBP52 and Cyp40.</title>
        <authorList>
            <person name="Pirkl F."/>
            <person name="Buchner J."/>
        </authorList>
    </citation>
    <scope>FUNCTION</scope>
    <scope>CATALYTIC ACTIVITY</scope>
</reference>
<reference key="11">
    <citation type="journal article" date="2007" name="Science">
        <title>ATM and ATR substrate analysis reveals extensive protein networks responsive to DNA damage.</title>
        <authorList>
            <person name="Matsuoka S."/>
            <person name="Ballif B.A."/>
            <person name="Smogorzewska A."/>
            <person name="McDonald E.R. III"/>
            <person name="Hurov K.E."/>
            <person name="Luo J."/>
            <person name="Bakalarski C.E."/>
            <person name="Zhao Z."/>
            <person name="Solimini N."/>
            <person name="Lerenthal Y."/>
            <person name="Shiloh Y."/>
            <person name="Gygi S.P."/>
            <person name="Elledge S.J."/>
        </authorList>
    </citation>
    <scope>PHOSPHORYLATION [LARGE SCALE ANALYSIS] AT SER-445</scope>
    <scope>IDENTIFICATION BY MASS SPECTROMETRY [LARGE SCALE ANALYSIS]</scope>
    <source>
        <tissue>Embryonic kidney</tissue>
    </source>
</reference>
<reference key="12">
    <citation type="journal article" date="2008" name="Proc. Natl. Acad. Sci. U.S.A.">
        <title>A quantitative atlas of mitotic phosphorylation.</title>
        <authorList>
            <person name="Dephoure N."/>
            <person name="Zhou C."/>
            <person name="Villen J."/>
            <person name="Beausoleil S.A."/>
            <person name="Bakalarski C.E."/>
            <person name="Elledge S.J."/>
            <person name="Gygi S.P."/>
        </authorList>
    </citation>
    <scope>IDENTIFICATION BY MASS SPECTROMETRY [LARGE SCALE ANALYSIS]</scope>
    <source>
        <tissue>Cervix carcinoma</tissue>
    </source>
</reference>
<reference key="13">
    <citation type="journal article" date="2009" name="Anal. Chem.">
        <title>Lys-N and trypsin cover complementary parts of the phosphoproteome in a refined SCX-based approach.</title>
        <authorList>
            <person name="Gauci S."/>
            <person name="Helbig A.O."/>
            <person name="Slijper M."/>
            <person name="Krijgsveld J."/>
            <person name="Heck A.J."/>
            <person name="Mohammed S."/>
        </authorList>
    </citation>
    <scope>ACETYLATION [LARGE SCALE ANALYSIS] AT MET-1</scope>
    <scope>IDENTIFICATION BY MASS SPECTROMETRY [LARGE SCALE ANALYSIS]</scope>
</reference>
<reference key="14">
    <citation type="journal article" date="2009" name="Sci. Signal.">
        <title>Quantitative phosphoproteomic analysis of T cell receptor signaling reveals system-wide modulation of protein-protein interactions.</title>
        <authorList>
            <person name="Mayya V."/>
            <person name="Lundgren D.H."/>
            <person name="Hwang S.-I."/>
            <person name="Rezaul K."/>
            <person name="Wu L."/>
            <person name="Eng J.K."/>
            <person name="Rodionov V."/>
            <person name="Han D.K."/>
        </authorList>
    </citation>
    <scope>IDENTIFICATION BY MASS SPECTROMETRY [LARGE SCALE ANALYSIS]</scope>
    <source>
        <tissue>Leukemic T-cell</tissue>
    </source>
</reference>
<reference key="15">
    <citation type="journal article" date="2010" name="Sci. Signal.">
        <title>Quantitative phosphoproteomics reveals widespread full phosphorylation site occupancy during mitosis.</title>
        <authorList>
            <person name="Olsen J.V."/>
            <person name="Vermeulen M."/>
            <person name="Santamaria A."/>
            <person name="Kumar C."/>
            <person name="Miller M.L."/>
            <person name="Jensen L.J."/>
            <person name="Gnad F."/>
            <person name="Cox J."/>
            <person name="Jensen T.S."/>
            <person name="Nigg E.A."/>
            <person name="Brunak S."/>
            <person name="Mann M."/>
        </authorList>
    </citation>
    <scope>IDENTIFICATION BY MASS SPECTROMETRY [LARGE SCALE ANALYSIS]</scope>
    <source>
        <tissue>Cervix carcinoma</tissue>
    </source>
</reference>
<reference key="16">
    <citation type="journal article" date="2011" name="BMC Syst. Biol.">
        <title>Initial characterization of the human central proteome.</title>
        <authorList>
            <person name="Burkard T.R."/>
            <person name="Planyavsky M."/>
            <person name="Kaupe I."/>
            <person name="Breitwieser F.P."/>
            <person name="Buerckstuemmer T."/>
            <person name="Bennett K.L."/>
            <person name="Superti-Furga G."/>
            <person name="Colinge J."/>
        </authorList>
    </citation>
    <scope>IDENTIFICATION BY MASS SPECTROMETRY [LARGE SCALE ANALYSIS]</scope>
</reference>
<reference key="17">
    <citation type="journal article" date="2013" name="J. Proteome Res.">
        <title>Toward a comprehensive characterization of a human cancer cell phosphoproteome.</title>
        <authorList>
            <person name="Zhou H."/>
            <person name="Di Palma S."/>
            <person name="Preisinger C."/>
            <person name="Peng M."/>
            <person name="Polat A.N."/>
            <person name="Heck A.J."/>
            <person name="Mohammed S."/>
        </authorList>
    </citation>
    <scope>PHOSPHORYLATION [LARGE SCALE ANALYSIS] AT SER-13 AND SER-445</scope>
    <scope>IDENTIFICATION BY MASS SPECTROMETRY [LARGE SCALE ANALYSIS]</scope>
    <source>
        <tissue>Cervix carcinoma</tissue>
        <tissue>Erythroleukemia</tissue>
    </source>
</reference>
<reference key="18">
    <citation type="journal article" date="2014" name="J. Proteomics">
        <title>An enzyme assisted RP-RPLC approach for in-depth analysis of human liver phosphoproteome.</title>
        <authorList>
            <person name="Bian Y."/>
            <person name="Song C."/>
            <person name="Cheng K."/>
            <person name="Dong M."/>
            <person name="Wang F."/>
            <person name="Huang J."/>
            <person name="Sun D."/>
            <person name="Wang L."/>
            <person name="Ye M."/>
            <person name="Zou H."/>
        </authorList>
    </citation>
    <scope>IDENTIFICATION BY MASS SPECTROMETRY [LARGE SCALE ANALYSIS]</scope>
    <source>
        <tissue>Liver</tissue>
    </source>
</reference>
<reference key="19">
    <citation type="journal article" date="2015" name="Proteomics">
        <title>N-terminome analysis of the human mitochondrial proteome.</title>
        <authorList>
            <person name="Vaca Jacome A.S."/>
            <person name="Rabilloud T."/>
            <person name="Schaeffer-Reiss C."/>
            <person name="Rompais M."/>
            <person name="Ayoub D."/>
            <person name="Lane L."/>
            <person name="Bairoch A."/>
            <person name="Van Dorsselaer A."/>
            <person name="Carapito C."/>
        </authorList>
    </citation>
    <scope>IDENTIFICATION BY MASS SPECTROMETRY [LARGE SCALE ANALYSIS]</scope>
</reference>
<reference key="20">
    <citation type="journal article" date="2015" name="Nucleic Acids Res.">
        <title>FKBP51 employs both scaffold and isomerase functions to promote NF-kappaB activation in melanoma.</title>
        <authorList>
            <person name="Romano S."/>
            <person name="Xiao Y."/>
            <person name="Nakaya M."/>
            <person name="D'Angelillo A."/>
            <person name="Chang M."/>
            <person name="Jin J."/>
            <person name="Hausch F."/>
            <person name="Masullo M."/>
            <person name="Feng X."/>
            <person name="Romano M.F."/>
            <person name="Sun S.C."/>
        </authorList>
    </citation>
    <scope>FUNCTION</scope>
    <scope>INTERACTION WITH IKBKB AND IKBKE</scope>
</reference>
<reference key="21">
    <citation type="journal article" date="2017" name="Cell Rep.">
        <title>Regulation of serine-threonine kinase Akt activation by NAD+-dependent deacetylase SIRT7.</title>
        <authorList>
            <person name="Yu J."/>
            <person name="Qin B."/>
            <person name="Wu F."/>
            <person name="Qin S."/>
            <person name="Nowsheen S."/>
            <person name="Shan S."/>
            <person name="Zayas J."/>
            <person name="Pei H."/>
            <person name="Lou Z."/>
            <person name="Wang L."/>
        </authorList>
    </citation>
    <scope>FUNCTION</scope>
    <scope>INTERACTION WITH AKT1 AND PHLPP1</scope>
    <scope>ACETYLATION AT LYS-28 AND LYS-155</scope>
    <scope>MUTAGENESIS OF LYS-28 AND LYS-155</scope>
</reference>
<reference key="22">
    <citation type="journal article" date="2017" name="EMBO J.">
        <title>USP49 negatively regulates tumorigenesis and chemoresistance through FKBP51-AKT signaling.</title>
        <authorList>
            <person name="Luo K."/>
            <person name="Li Y."/>
            <person name="Yin Y."/>
            <person name="Li L."/>
            <person name="Wu C."/>
            <person name="Chen Y."/>
            <person name="Nowsheen S."/>
            <person name="Hu Q."/>
            <person name="Zhang L."/>
            <person name="Lou Z."/>
            <person name="Yuan J."/>
        </authorList>
    </citation>
    <scope>FUNCTION</scope>
    <scope>DEUBIQUITINATION BY USP49</scope>
</reference>
<reference key="23">
    <citation type="journal article" date="2019" name="J. Virol.">
        <title>Novel Functions of IFI44L as a Feedback Regulator of Host Antiviral Responses.</title>
        <authorList>
            <person name="DeDiego M.L."/>
            <person name="Martinez-Sobrido L."/>
            <person name="Topham D.J."/>
        </authorList>
    </citation>
    <scope>FUNCTION</scope>
    <scope>INTERACTION WITH IFI44L; IKBKB AND IKBKE</scope>
</reference>
<reference key="24">
    <citation type="journal article" date="2003" name="Proc. Natl. Acad. Sci. U.S.A.">
        <title>Structure of the large FK506-binding protein FKBP51, an Hsp90-binding protein and a component of steroid receptor complexes.</title>
        <authorList>
            <person name="Sinars C.R."/>
            <person name="Cheung-Flynn J."/>
            <person name="Rimerman R.A."/>
            <person name="Scammell J.G."/>
            <person name="Smith D.F."/>
            <person name="Clardy J."/>
        </authorList>
    </citation>
    <scope>X-RAY CRYSTALLOGRAPHY (2.7 ANGSTROMS)</scope>
    <scope>FUNCTION</scope>
</reference>
<protein>
    <recommendedName>
        <fullName>Peptidyl-prolyl cis-trans isomerase FKBP5</fullName>
        <shortName>PPIase FKBP5</shortName>
        <ecNumber evidence="4">5.2.1.8</ecNumber>
    </recommendedName>
    <alternativeName>
        <fullName>51 kDa FK506-binding protein</fullName>
        <shortName>51 kDa FKBP</shortName>
        <shortName>FKBP-51</shortName>
    </alternativeName>
    <alternativeName>
        <fullName>54 kDa progesterone receptor-associated immunophilin</fullName>
    </alternativeName>
    <alternativeName>
        <fullName>Androgen-regulated protein 6</fullName>
    </alternativeName>
    <alternativeName>
        <fullName>FF1 antigen</fullName>
    </alternativeName>
    <alternativeName>
        <fullName>FK506-binding protein 5</fullName>
        <shortName>FKBP-5</shortName>
    </alternativeName>
    <alternativeName>
        <fullName>FKBP54</fullName>
        <shortName>p54</shortName>
    </alternativeName>
    <alternativeName>
        <fullName>HSP90-binding immunophilin</fullName>
    </alternativeName>
    <alternativeName>
        <fullName>Rotamase</fullName>
    </alternativeName>
</protein>
<name>FKBP5_HUMAN</name>
<keyword id="KW-0002">3D-structure</keyword>
<keyword id="KW-0007">Acetylation</keyword>
<keyword id="KW-0025">Alternative splicing</keyword>
<keyword id="KW-0143">Chaperone</keyword>
<keyword id="KW-0963">Cytoplasm</keyword>
<keyword id="KW-0413">Isomerase</keyword>
<keyword id="KW-0539">Nucleus</keyword>
<keyword id="KW-0597">Phosphoprotein</keyword>
<keyword id="KW-1267">Proteomics identification</keyword>
<keyword id="KW-1185">Reference proteome</keyword>
<keyword id="KW-0677">Repeat</keyword>
<keyword id="KW-0697">Rotamase</keyword>
<keyword id="KW-0802">TPR repeat</keyword>
<keyword id="KW-0832">Ubl conjugation</keyword>